<name>ITAM_HUMAN</name>
<keyword id="KW-0002">3D-structure</keyword>
<keyword id="KW-0025">Alternative splicing</keyword>
<keyword id="KW-0106">Calcium</keyword>
<keyword id="KW-0130">Cell adhesion</keyword>
<keyword id="KW-1003">Cell membrane</keyword>
<keyword id="KW-0903">Direct protein sequencing</keyword>
<keyword id="KW-1015">Disulfide bond</keyword>
<keyword id="KW-0325">Glycoprotein</keyword>
<keyword id="KW-0391">Immunity</keyword>
<keyword id="KW-0399">Innate immunity</keyword>
<keyword id="KW-0401">Integrin</keyword>
<keyword id="KW-0460">Magnesium</keyword>
<keyword id="KW-0472">Membrane</keyword>
<keyword id="KW-0479">Metal-binding</keyword>
<keyword id="KW-1267">Proteomics identification</keyword>
<keyword id="KW-0675">Receptor</keyword>
<keyword id="KW-1185">Reference proteome</keyword>
<keyword id="KW-0677">Repeat</keyword>
<keyword id="KW-0732">Signal</keyword>
<keyword id="KW-0772">Systemic lupus erythematosus</keyword>
<keyword id="KW-0812">Transmembrane</keyword>
<keyword id="KW-1133">Transmembrane helix</keyword>
<reference key="1">
    <citation type="journal article" date="1988" name="J. Biol. Chem.">
        <title>The human leukocyte adhesion glycoprotein Mac-1 (complement receptor type 3, CD11b) alpha subunit. Cloning, primary structure, and relation to the integrins, von Willebrand factor and factor B.</title>
        <authorList>
            <person name="Corbi A.L."/>
            <person name="Kishimoto T.K."/>
            <person name="Miller L.J."/>
            <person name="Springer T.A."/>
        </authorList>
    </citation>
    <scope>NUCLEOTIDE SEQUENCE [MRNA] (ISOFORM 2)</scope>
</reference>
<reference key="2">
    <citation type="journal article" date="1988" name="Proc. Natl. Acad. Sci. U.S.A.">
        <title>Molecular cloning of the alpha subunit of human and guinea pig leukocyte adhesion glycoprotein Mo1: chromosomal localization and homology to the alpha subunits of integrins.</title>
        <authorList>
            <person name="Arnaout M.A."/>
            <person name="Remold-O'Donnell E."/>
            <person name="Pierce M.W."/>
            <person name="Harris P."/>
            <person name="Tenen D.G."/>
        </authorList>
    </citation>
    <scope>NUCLEOTIDE SEQUENCE [MRNA] (ISOFORM 1)</scope>
</reference>
<reference key="3">
    <citation type="journal article" date="1988" name="J. Cell Biol.">
        <title>Amino acid sequence of the alpha subunit of human leukocyte adhesion receptor Mo1 (complement receptor type 3).</title>
        <authorList>
            <person name="Arnaout M.A."/>
            <person name="Gupta S.K."/>
            <person name="Pierce M.W."/>
            <person name="Tenen D.G."/>
        </authorList>
    </citation>
    <scope>NUCLEOTIDE SEQUENCE [MRNA] (ISOFORM 1)</scope>
</reference>
<reference key="4">
    <citation type="journal article" date="1993" name="J. Immunol.">
        <title>Structural analysis of the CD11b gene and phylogenetic analysis of the alpha-integrin gene family demonstrate remarkable conservation of genomic organization and suggest early diversification during evolution.</title>
        <authorList>
            <person name="Fleming J.C."/>
            <person name="Pahl H.L."/>
            <person name="Gonzalez D.A."/>
            <person name="Smith T.F."/>
            <person name="Tenen D.G."/>
        </authorList>
    </citation>
    <scope>NUCLEOTIDE SEQUENCE [GENOMIC DNA] (ISOFORM 1)</scope>
</reference>
<reference key="5">
    <citation type="journal article" date="2004" name="Genome Res.">
        <title>The status, quality, and expansion of the NIH full-length cDNA project: the Mammalian Gene Collection (MGC).</title>
        <authorList>
            <consortium name="The MGC Project Team"/>
        </authorList>
    </citation>
    <scope>NUCLEOTIDE SEQUENCE [LARGE SCALE MRNA] (ISOFORM 1)</scope>
    <scope>VARIANTS HIS-77; THR-441; VAL-858 AND SER-1146</scope>
</reference>
<reference key="6">
    <citation type="journal article" date="1989" name="Proc. Natl. Acad. Sci. U.S.A.">
        <title>cDNA sequence for the alpha M subunit of the human neutrophil adherence receptor indicates homology to integrin alpha subunits.</title>
        <authorList>
            <person name="Hickstein D.D."/>
            <person name="Hickey M.J."/>
            <person name="Ozols J."/>
            <person name="Baker D.M."/>
            <person name="Back A.L."/>
            <person name="Roth G.J."/>
        </authorList>
    </citation>
    <scope>NUCLEOTIDE SEQUENCE [MRNA] OF 9-1152 (ISOFORM 2)</scope>
</reference>
<reference key="7">
    <citation type="journal article" date="1991" name="Proc. Natl. Acad. Sci. U.S.A.">
        <title>The promoter of the CD11b gene directs myeloid-specific and developmentally regulated expression.</title>
        <authorList>
            <person name="Shelley C.S."/>
            <person name="Arnaout M.A."/>
        </authorList>
    </citation>
    <scope>NUCLEOTIDE SEQUENCE [GENOMIC DNA] OF 1-9</scope>
    <scope>TISSUE SPECIFICITY</scope>
</reference>
<reference key="8">
    <citation type="journal article" date="1992" name="Blood">
        <title>Characterization of the myeloid-specific CD11b promoter.</title>
        <authorList>
            <person name="Pahl H.L."/>
            <person name="Rosmarin A.G."/>
            <person name="Tenen D.G."/>
        </authorList>
    </citation>
    <scope>NUCLEOTIDE SEQUENCE [GENOMIC DNA] OF 1-9</scope>
    <source>
        <tissue>Blood</tissue>
    </source>
</reference>
<reference key="9">
    <citation type="journal article" date="1986" name="Biochim. Biophys. Acta">
        <title>N-terminal sequence of human leukocyte glycoprotein Mo1: conservation across species and homology to platelet IIb/IIIa.</title>
        <authorList>
            <person name="Pierce M.W."/>
            <person name="Remold-O'Donnell E."/>
            <person name="Todd R.F. III"/>
            <person name="Arnaout M.A."/>
        </authorList>
    </citation>
    <scope>PROTEIN SEQUENCE OF 17-31</scope>
</reference>
<reference key="10">
    <citation type="journal article" date="1998" name="J. Immunol.">
        <title>Human polymorphonuclear leukocytes adhere to complement factor H through an interaction that involves alphaMbeta2 (CD11b/CD18).</title>
        <authorList>
            <person name="DiScipio R.G."/>
            <person name="Daffern P.J."/>
            <person name="Schraufstaetter I.U."/>
            <person name="Sriramarao P."/>
        </authorList>
    </citation>
    <scope>FUNCTION</scope>
    <scope>INTERACTION WITH CFH</scope>
</reference>
<reference key="11">
    <citation type="journal article" date="2002" name="J. Exp. Med.">
        <title>The junctional adhesion molecule 3 (JAM-3) on human platelets is a counterreceptor for the leukocyte integrin Mac-1.</title>
        <authorList>
            <person name="Santoso S."/>
            <person name="Sachs U.J.H."/>
            <person name="Kroll H."/>
            <person name="Linder M."/>
            <person name="Ruf A."/>
            <person name="Preissner K.T."/>
            <person name="Chavakis T."/>
        </authorList>
    </citation>
    <scope>INTERACTION WITH JAM3</scope>
</reference>
<reference key="12">
    <citation type="journal article" date="2004" name="Mol. Biol. Cell">
        <title>JAM-C is a component of desmosomes and a ligand for CD11b/CD18-mediated neutrophil transepithelial migration.</title>
        <authorList>
            <person name="Zen K."/>
            <person name="Babbin B.A."/>
            <person name="Liu Y."/>
            <person name="Whelan J.B."/>
            <person name="Nusrat A."/>
            <person name="Parkos C.A."/>
        </authorList>
    </citation>
    <scope>INTERACTION WITH JAM3</scope>
</reference>
<reference key="13">
    <citation type="journal article" date="2009" name="J. Proteome Res.">
        <title>Glycoproteomics analysis of human liver tissue by combination of multiple enzyme digestion and hydrazide chemistry.</title>
        <authorList>
            <person name="Chen R."/>
            <person name="Jiang X."/>
            <person name="Sun D."/>
            <person name="Han G."/>
            <person name="Wang F."/>
            <person name="Ye M."/>
            <person name="Wang L."/>
            <person name="Zou H."/>
        </authorList>
    </citation>
    <scope>GLYCOSYLATION [LARGE SCALE ANALYSIS] AT ASN-900; ASN-940 AND ASN-946</scope>
    <source>
        <tissue>Liver</tissue>
    </source>
</reference>
<reference key="14">
    <citation type="journal article" date="2010" name="J. Immunol.">
        <title>Factor H and factor H-related protein 1 bind to human neutrophils via complement receptor 3, mediate attachment to Candida albicans, and enhance neutrophil antimicrobial activity.</title>
        <authorList>
            <person name="Losse J."/>
            <person name="Zipfel P.F."/>
            <person name="Jozsi M."/>
        </authorList>
    </citation>
    <scope>FUNCTION</scope>
    <scope>INTERACTION WITH CFH</scope>
</reference>
<reference key="15">
    <citation type="journal article" date="2011" name="J. Biol. Chem.">
        <title>Complement receptor Mac-1 is an adaptor for NB1 (CD177)-mediated PR3-ANCA neutrophil activation.</title>
        <authorList>
            <person name="Jerke U."/>
            <person name="Rolle S."/>
            <person name="Dittmar G."/>
            <person name="Bayat B."/>
            <person name="Santoso S."/>
            <person name="Sporbert A."/>
            <person name="Luft F."/>
            <person name="Kettritz R."/>
        </authorList>
    </citation>
    <scope>FUNCTION</scope>
    <scope>IDENTIFICATION IN A COMPLEX WITH CD177 AND ITGB2</scope>
    <scope>SUBCELLULAR LOCATION</scope>
    <scope>TISSUE SPECIFICITY</scope>
    <scope>IDENTIFICATION BY MASS SPECTROMETRY</scope>
</reference>
<reference key="16">
    <citation type="journal article" date="2016" name="Biochem. Biophys. Res. Commun.">
        <title>LFA-1 and Mac-1 integrins bind to the serine/threonine-rich domain of thrombomodulin.</title>
        <authorList>
            <person name="Kawamoto E."/>
            <person name="Okamoto T."/>
            <person name="Takagi Y."/>
            <person name="Honda G."/>
            <person name="Suzuki K."/>
            <person name="Imai H."/>
            <person name="Shimaoka M."/>
        </authorList>
    </citation>
    <scope>INTERACTION WITH THBD</scope>
</reference>
<reference key="17">
    <citation type="journal article" date="2017" name="Blood">
        <title>CD177 modulates human neutrophil migration through activation-mediated integrin and chemoreceptor regulation.</title>
        <authorList>
            <person name="Bai M."/>
            <person name="Grieshaber-Bouyer R."/>
            <person name="Wang J."/>
            <person name="Schmider A.B."/>
            <person name="Wilson Z.S."/>
            <person name="Zeng L."/>
            <person name="Halyabar O."/>
            <person name="Godin M.D."/>
            <person name="Nguyen H.N."/>
            <person name="Levescot A."/>
            <person name="Cunin P."/>
            <person name="Lefort C.T."/>
            <person name="Soberman R.J."/>
            <person name="Nigrovic P.A."/>
        </authorList>
    </citation>
    <scope>FUNCTION</scope>
    <scope>IDENTIFICATION IN A COMPLEX WITH CD177 AND ITGB2</scope>
    <scope>SUBCELLULAR LOCATION</scope>
    <scope>TISSUE SPECIFICITY</scope>
</reference>
<reference key="18">
    <citation type="journal article" date="2024" name="EMBO Rep.">
        <title>Deletion of Tmem268 in mice suppresses anti-infectious immune responses by downregulating CD11b signaling.</title>
        <authorList>
            <person name="Duan M."/>
            <person name="Zhang X."/>
            <person name="Lou Y."/>
            <person name="Feng J."/>
            <person name="Guo P."/>
            <person name="Ye S."/>
            <person name="Lv P."/>
            <person name="Chen Y."/>
        </authorList>
    </citation>
    <scope>INTERACTION WITH TMEM268</scope>
</reference>
<reference key="19">
    <citation type="journal article" date="1995" name="Cell">
        <title>Crystal structure of the A domain from the alpha subunit of integrin CR3 (CD11b/CD18).</title>
        <authorList>
            <person name="Lee J.O."/>
            <person name="Rieu P."/>
            <person name="Arnaout M.A."/>
            <person name="Liddington R."/>
        </authorList>
    </citation>
    <scope>X-RAY CRYSTALLOGRAPHY (1.7 ANGSTROMS) OF 148-331</scope>
</reference>
<reference key="20">
    <citation type="journal article" date="1995" name="Structure">
        <title>Two conformations of the integrin A-domain (I-domain): a pathway for activation?</title>
        <authorList>
            <person name="Lee J.O."/>
            <person name="Bankston L.A."/>
            <person name="Arnaout M.A."/>
            <person name="Liddington R.C."/>
        </authorList>
    </citation>
    <scope>X-RAY CRYSTALLOGRAPHY (2.0 ANGSTROMS) OF 148-334</scope>
</reference>
<reference key="21">
    <citation type="journal article" date="1998" name="Structure">
        <title>Cation binding to the integrin CD11b I domain and activation model assessment.</title>
        <authorList>
            <person name="Baldwin E.T."/>
            <person name="Sarver R.W."/>
            <person name="Bryant G.L. Jr."/>
            <person name="Curry K.A."/>
            <person name="Fairbanks M.B."/>
            <person name="Finzel B.C."/>
            <person name="Garlick R.L."/>
            <person name="Heinrikson R.L."/>
            <person name="Horton N.C."/>
            <person name="Kelley L.L."/>
            <person name="Mildner A.M."/>
            <person name="Moon J.B."/>
            <person name="Mott J.E."/>
            <person name="Mutchler V.T."/>
            <person name="Tomich C.S."/>
            <person name="Watenpaugh K.D."/>
            <person name="Wiley V.H."/>
        </authorList>
    </citation>
    <scope>X-RAY CRYSTALLOGRAPHY (2.7 ANGSTROMS) OF 148-337</scope>
</reference>
<reference key="22">
    <citation type="journal article" date="1998" name="Proc. Natl. Acad. Sci. U.S.A.">
        <title>Experimental support for a beta-propeller domain in integrin alpha-subunits and a calcium binding site on its lower surface.</title>
        <authorList>
            <person name="Oxvig C."/>
            <person name="Springer T.A."/>
        </authorList>
    </citation>
    <scope>3D-STRUCTURE MODELING OF 17-616</scope>
</reference>
<reference key="23">
    <citation type="journal article" date="2008" name="Nat. Genet.">
        <title>A nonsynonymous functional variant in integrin-alpha(M) (encoded by ITGAM) is associated with systemic lupus erythematosus.</title>
        <authorList>
            <person name="Nath S.K."/>
            <person name="Han S."/>
            <person name="Kim-Howard X."/>
            <person name="Kelly J.A."/>
            <person name="Viswanathan P."/>
            <person name="Gilkeson G.S."/>
            <person name="Chen W."/>
            <person name="Zhu C."/>
            <person name="McEver R.P."/>
            <person name="Kimberly R.P."/>
            <person name="Alarcon-Riquelme M.E."/>
            <person name="Vyse T.J."/>
            <person name="Li Q.-Z."/>
            <person name="Wakeland E.K."/>
            <person name="Merrill J.T."/>
            <person name="James J.A."/>
            <person name="Kaufman K.M."/>
            <person name="Guthridge J.M."/>
            <person name="Harley J.B."/>
        </authorList>
    </citation>
    <scope>INVOLVEMENT IN SUSCEPTIBILITY TO SLEB6</scope>
    <scope>VARIANT HIS-77</scope>
</reference>
<reference key="24">
    <citation type="journal article" date="2008" name="Nat. Genet.">
        <title>Genome-wide association scan in women with systemic lupus erythematosus identifies susceptibility variants in ITGAM, PXK, KIAA1542 and other loci.</title>
        <authorList>
            <person name="Harley J.B."/>
            <person name="Alarcon-Riquelme M.E."/>
            <person name="Criswell L.A."/>
            <person name="Jacob C.O."/>
            <person name="Kimberly R.P."/>
            <person name="Moser K.L."/>
            <person name="Tsao B.P."/>
            <person name="Vyse T.J."/>
            <person name="Langefeld C.D."/>
            <person name="Nath S.K."/>
            <person name="Guthridge J.M."/>
            <person name="Cobb B.L."/>
            <person name="Mirel D.B."/>
            <person name="Marion M.C."/>
            <person name="Williams A.H."/>
            <person name="Divers J."/>
            <person name="Wang W."/>
            <person name="Frank S.G."/>
            <person name="Namjou B."/>
            <person name="Gabriel S.B."/>
            <person name="Lee A.T."/>
            <person name="Gregersen P.K."/>
            <person name="Behrens T.W."/>
            <person name="Taylor K.E."/>
            <person name="Fernando M."/>
            <person name="Zidovetzki R."/>
            <person name="Gaffney P.M."/>
            <person name="Edberg J.C."/>
            <person name="Rioux J.D."/>
            <person name="Ojwang J.O."/>
            <person name="James J.A."/>
            <person name="Merrill J.T."/>
            <person name="Gilkeson G.S."/>
            <person name="Seldin M.F."/>
            <person name="Yin H."/>
            <person name="Baechler E.C."/>
            <person name="Li Q.-Z."/>
            <person name="Wakeland E.K."/>
            <person name="Bruner G.R."/>
            <person name="Kaufman K.M."/>
            <person name="Kelly J.A."/>
        </authorList>
    </citation>
    <scope>INVOLVEMENT IN SUSCEPTIBILITY TO SLEB6</scope>
</reference>
<comment type="function">
    <text evidence="2 14 15 17 20 23">Integrin ITGAM/ITGB2 is implicated in various adhesive interactions of monocytes, macrophages and granulocytes as well as in mediating the uptake of complement-coated particles and pathogens (PubMed:20008295, PubMed:9558116). It is identical with CR-3, the receptor for the iC3b fragment of the third complement component. It probably recognizes the R-G-D peptide in C3b. Integrin ITGAM/ITGB2 is also a receptor for fibrinogen, factor X and ICAM1. It recognizes P1 and P2 peptides of fibrinogen gamma chain. Regulates neutrophil migration (PubMed:28807980). In association with beta subunit ITGB2/CD18, required for CD177-PRTN3-mediated activation of TNF primed neutrophils (PubMed:21193407). May regulate phagocytosis-induced apoptosis in extravasated neutrophils (By similarity). May play a role in mast cell development (By similarity). Required with TYROBP/DAP12 in microglia to control production of microglial superoxide ions which promote the neuronal apoptosis that occurs during brain development (By similarity).</text>
</comment>
<comment type="subunit">
    <text evidence="7 9 14 15 16 19 20">Heterodimer of an alpha and a beta subunit. ITGAM associates with ITGB2. Found in a complex with CD177 and ITGB2/CD18 (PubMed:21193407). Interacts with JAM3 (PubMed:12208882, PubMed:15194813). Interacts with THBD (PubMed:27055590). Interacts with complement factor H/CFH; this interaction mediates adhesion of neutrophils to pathogens leading to pathogen clearance (PubMed:20008295, PubMed:9558116). Interacts with TMEM268; this interaction inhibits ITGAM degradation via the endosome-lysosome pathway (PubMed:38730209).</text>
</comment>
<comment type="interaction">
    <interactant intactId="EBI-2568251">
        <id>P11215</id>
    </interactant>
    <interactant intactId="EBI-348517">
        <id>O95870</id>
        <label>ABHD16A</label>
    </interactant>
    <organismsDiffer>false</organismsDiffer>
    <experiments>3</experiments>
</comment>
<comment type="interaction">
    <interactant intactId="EBI-2568251">
        <id>P11215</id>
    </interactant>
    <interactant intactId="EBI-13059134">
        <id>Q13520</id>
        <label>AQP6</label>
    </interactant>
    <organismsDiffer>false</organismsDiffer>
    <experiments>3</experiments>
</comment>
<comment type="interaction">
    <interactant intactId="EBI-2568251">
        <id>P11215</id>
    </interactant>
    <interactant intactId="EBI-11343438">
        <id>Q3SXY8</id>
        <label>ARL13B</label>
    </interactant>
    <organismsDiffer>false</organismsDiffer>
    <experiments>3</experiments>
</comment>
<comment type="interaction">
    <interactant intactId="EBI-2568251">
        <id>P11215</id>
    </interactant>
    <interactant intactId="EBI-7797864">
        <id>P11912</id>
        <label>CD79A</label>
    </interactant>
    <organismsDiffer>false</organismsDiffer>
    <experiments>3</experiments>
</comment>
<comment type="interaction">
    <interactant intactId="EBI-2568251">
        <id>P11215</id>
    </interactant>
    <interactant intactId="EBI-2622997">
        <id>Q9HA82</id>
        <label>CERS4</label>
    </interactant>
    <organismsDiffer>false</organismsDiffer>
    <experiments>3</experiments>
</comment>
<comment type="interaction">
    <interactant intactId="EBI-2568251">
        <id>P11215</id>
    </interactant>
    <interactant intactId="EBI-17274839">
        <id>P58418</id>
        <label>CLRN1</label>
    </interactant>
    <organismsDiffer>false</organismsDiffer>
    <experiments>3</experiments>
</comment>
<comment type="interaction">
    <interactant intactId="EBI-2568251">
        <id>P11215</id>
    </interactant>
    <interactant intactId="EBI-6942903">
        <id>Q96BA8</id>
        <label>CREB3L1</label>
    </interactant>
    <organismsDiffer>false</organismsDiffer>
    <experiments>3</experiments>
</comment>
<comment type="interaction">
    <interactant intactId="EBI-2568251">
        <id>P11215</id>
    </interactant>
    <interactant intactId="EBI-18030204">
        <id>Q9UBT3</id>
        <label>DKK4</label>
    </interactant>
    <organismsDiffer>false</organismsDiffer>
    <experiments>3</experiments>
</comment>
<comment type="interaction">
    <interactant intactId="EBI-2568251">
        <id>P11215</id>
    </interactant>
    <interactant intactId="EBI-18535450">
        <id>Q9GZR5</id>
        <label>ELOVL4</label>
    </interactant>
    <organismsDiffer>false</organismsDiffer>
    <experiments>3</experiments>
</comment>
<comment type="interaction">
    <interactant intactId="EBI-2568251">
        <id>P11215</id>
    </interactant>
    <interactant intactId="EBI-781551">
        <id>Q9Y282</id>
        <label>ERGIC3</label>
    </interactant>
    <organismsDiffer>false</organismsDiffer>
    <experiments>3</experiments>
</comment>
<comment type="interaction">
    <interactant intactId="EBI-2568251">
        <id>P11215</id>
    </interactant>
    <interactant intactId="EBI-17458373">
        <id>P48165</id>
        <label>GJA8</label>
    </interactant>
    <organismsDiffer>false</organismsDiffer>
    <experiments>3</experiments>
</comment>
<comment type="interaction">
    <interactant intactId="EBI-2568251">
        <id>P11215</id>
    </interactant>
    <interactant intactId="EBI-17565645">
        <id>P08034</id>
        <label>GJB1</label>
    </interactant>
    <organismsDiffer>false</organismsDiffer>
    <experiments>3</experiments>
</comment>
<comment type="interaction">
    <interactant intactId="EBI-2568251">
        <id>P11215</id>
    </interactant>
    <interactant intactId="EBI-3917143">
        <id>Q5T7V8</id>
        <label>GORAB</label>
    </interactant>
    <organismsDiffer>false</organismsDiffer>
    <experiments>3</experiments>
</comment>
<comment type="interaction">
    <interactant intactId="EBI-2568251">
        <id>P11215</id>
    </interactant>
    <interactant intactId="EBI-18076404">
        <id>O15529</id>
        <label>GPR42</label>
    </interactant>
    <organismsDiffer>false</organismsDiffer>
    <experiments>3</experiments>
</comment>
<comment type="interaction">
    <interactant intactId="EBI-2568251">
        <id>P11215</id>
    </interactant>
    <interactant intactId="EBI-18053395">
        <id>Q7Z5P4</id>
        <label>HSD17B13</label>
    </interactant>
    <organismsDiffer>false</organismsDiffer>
    <experiments>3</experiments>
</comment>
<comment type="interaction">
    <interactant intactId="EBI-2568251">
        <id>P11215</id>
    </interactant>
    <interactant intactId="EBI-749265">
        <id>Q8N6L0</id>
        <label>KASH5</label>
    </interactant>
    <organismsDiffer>false</organismsDiffer>
    <experiments>3</experiments>
</comment>
<comment type="interaction">
    <interactant intactId="EBI-2568251">
        <id>P11215</id>
    </interactant>
    <interactant intactId="EBI-12017638">
        <id>P48051</id>
        <label>KCNJ6</label>
    </interactant>
    <organismsDiffer>false</organismsDiffer>
    <experiments>3</experiments>
</comment>
<comment type="interaction">
    <interactant intactId="EBI-2568251">
        <id>P11215</id>
    </interactant>
    <interactant intactId="EBI-8632435">
        <id>P43628</id>
        <label>KIR2DL3</label>
    </interactant>
    <organismsDiffer>false</organismsDiffer>
    <experiments>3</experiments>
</comment>
<comment type="interaction">
    <interactant intactId="EBI-2568251">
        <id>P11215</id>
    </interactant>
    <interactant intactId="EBI-724754">
        <id>O14880</id>
        <label>MGST3</label>
    </interactant>
    <organismsDiffer>false</organismsDiffer>
    <experiments>3</experiments>
</comment>
<comment type="interaction">
    <interactant intactId="EBI-2568251">
        <id>P11215</id>
    </interactant>
    <interactant intactId="EBI-6163737">
        <id>Q8N4V1</id>
        <label>MMGT1</label>
    </interactant>
    <organismsDiffer>false</organismsDiffer>
    <experiments>3</experiments>
</comment>
<comment type="interaction">
    <interactant intactId="EBI-2568251">
        <id>P11215</id>
    </interactant>
    <interactant intactId="EBI-5454865">
        <id>Q6IN84</id>
        <label>MRM1</label>
    </interactant>
    <organismsDiffer>false</organismsDiffer>
    <experiments>3</experiments>
</comment>
<comment type="interaction">
    <interactant intactId="EBI-2568251">
        <id>P11215</id>
    </interactant>
    <interactant intactId="EBI-17263240">
        <id>P15941-11</id>
        <label>MUC1</label>
    </interactant>
    <organismsDiffer>false</organismsDiffer>
    <experiments>3</experiments>
</comment>
<comment type="interaction">
    <interactant intactId="EBI-2568251">
        <id>P11215</id>
    </interactant>
    <interactant intactId="EBI-1050125">
        <id>O15173</id>
        <label>PGRMC2</label>
    </interactant>
    <organismsDiffer>false</organismsDiffer>
    <experiments>3</experiments>
</comment>
<comment type="interaction">
    <interactant intactId="EBI-2568251">
        <id>P11215</id>
    </interactant>
    <interactant intactId="EBI-17630288">
        <id>P57054</id>
        <label>PIGP</label>
    </interactant>
    <organismsDiffer>false</organismsDiffer>
    <experiments>3</experiments>
</comment>
<comment type="interaction">
    <interactant intactId="EBI-2568251">
        <id>P11215</id>
    </interactant>
    <interactant intactId="EBI-473725">
        <id>P21246</id>
        <label>PTN</label>
    </interactant>
    <organismsDiffer>false</organismsDiffer>
    <experiments>3</experiments>
</comment>
<comment type="interaction">
    <interactant intactId="EBI-2568251">
        <id>P11215</id>
    </interactant>
    <interactant intactId="EBI-11337973">
        <id>Q9BRK0</id>
        <label>REEP2</label>
    </interactant>
    <organismsDiffer>false</organismsDiffer>
    <experiments>3</experiments>
</comment>
<comment type="interaction">
    <interactant intactId="EBI-2568251">
        <id>P11215</id>
    </interactant>
    <interactant intactId="EBI-7545592">
        <id>Q9H6H4</id>
        <label>REEP4</label>
    </interactant>
    <organismsDiffer>false</organismsDiffer>
    <experiments>3</experiments>
</comment>
<comment type="interaction">
    <interactant intactId="EBI-2568251">
        <id>P11215</id>
    </interactant>
    <interactant intactId="EBI-8636004">
        <id>Q96GQ5</id>
        <label>RUSF1</label>
    </interactant>
    <organismsDiffer>false</organismsDiffer>
    <experiments>3</experiments>
</comment>
<comment type="interaction">
    <interactant intactId="EBI-2568251">
        <id>P11215</id>
    </interactant>
    <interactant intactId="EBI-17247926">
        <id>Q9NY72</id>
        <label>SCN3B</label>
    </interactant>
    <organismsDiffer>false</organismsDiffer>
    <experiments>3</experiments>
</comment>
<comment type="interaction">
    <interactant intactId="EBI-2568251">
        <id>P11215</id>
    </interactant>
    <interactant intactId="EBI-18159983">
        <id>Q3KNW5</id>
        <label>SLC10A6</label>
    </interactant>
    <organismsDiffer>false</organismsDiffer>
    <experiments>3</experiments>
</comment>
<comment type="interaction">
    <interactant intactId="EBI-2568251">
        <id>P11215</id>
    </interactant>
    <interactant intactId="EBI-17295964">
        <id>Q9NQQ7-3</id>
        <label>SLC35C2</label>
    </interactant>
    <organismsDiffer>false</organismsDiffer>
    <experiments>3</experiments>
</comment>
<comment type="interaction">
    <interactant intactId="EBI-2568251">
        <id>P11215</id>
    </interactant>
    <interactant intactId="EBI-8032987">
        <id>Q8N9I0</id>
        <label>SYT2</label>
    </interactant>
    <organismsDiffer>false</organismsDiffer>
    <experiments>3</experiments>
</comment>
<comment type="interaction">
    <interactant intactId="EBI-2568251">
        <id>P11215</id>
    </interactant>
    <interactant intactId="EBI-8638294">
        <id>Q9NUH8</id>
        <label>TMEM14B</label>
    </interactant>
    <organismsDiffer>false</organismsDiffer>
    <experiments>3</experiments>
</comment>
<comment type="interaction">
    <interactant intactId="EBI-2568251">
        <id>P11215</id>
    </interactant>
    <interactant intactId="EBI-12195227">
        <id>Q8NBD8</id>
        <label>TMEM229B</label>
    </interactant>
    <organismsDiffer>false</organismsDiffer>
    <experiments>3</experiments>
</comment>
<comment type="interaction">
    <interactant intactId="EBI-2568251">
        <id>P11215</id>
    </interactant>
    <interactant intactId="EBI-18178701">
        <id>Q4KMG9</id>
        <label>TMEM52B</label>
    </interactant>
    <organismsDiffer>false</organismsDiffer>
    <experiments>3</experiments>
</comment>
<comment type="interaction">
    <interactant intactId="EBI-2568251">
        <id>P11215</id>
    </interactant>
    <interactant intactId="EBI-6447886">
        <id>Q9Y320</id>
        <label>TMX2</label>
    </interactant>
    <organismsDiffer>false</organismsDiffer>
    <experiments>3</experiments>
</comment>
<comment type="subcellular location">
    <subcellularLocation>
        <location evidence="15">Cell membrane</location>
        <topology evidence="23">Single-pass type I membrane protein</topology>
    </subcellularLocation>
    <subcellularLocation>
        <location evidence="15">Membrane raft</location>
        <topology evidence="23">Single-pass type I membrane protein</topology>
    </subcellularLocation>
</comment>
<comment type="alternative products">
    <event type="alternative splicing"/>
    <isoform>
        <id>P11215-1</id>
        <name>1</name>
        <sequence type="displayed"/>
    </isoform>
    <isoform>
        <id>P11215-2</id>
        <name>2</name>
        <sequence type="described" ref="VSP_047365"/>
    </isoform>
</comment>
<comment type="tissue specificity">
    <text evidence="8 15">Predominantly expressed in monocytes and granulocytes (PubMed:1346576). Expressed in neutrophils (at protein level) (PubMed:21193407).</text>
</comment>
<comment type="domain">
    <text>The integrin I-domain (insert) is a VWFA domain. Integrins with I-domains do not undergo protease cleavage.</text>
</comment>
<comment type="disease" evidence="11 12">
    <disease id="DI-02654">
        <name>Systemic lupus erythematosus 6</name>
        <acronym>SLEB6</acronym>
        <description>A chronic, relapsing, inflammatory, and often febrile multisystemic disorder of connective tissue, characterized principally by involvement of the skin, joints, kidneys and serosal membranes. It is of unknown etiology, but is thought to represent a failure of the regulatory mechanisms of the autoimmune system. The disease is marked by a wide range of system dysfunctions, an elevated erythrocyte sedimentation rate, and the formation of LE cells in the blood or bone marrow.</description>
        <dbReference type="MIM" id="609939"/>
    </disease>
    <text>Disease susceptibility may be associated with variants affecting the gene represented in this entry.</text>
</comment>
<comment type="similarity">
    <text evidence="23">Belongs to the integrin alpha chain family.</text>
</comment>
<protein>
    <recommendedName>
        <fullName>Integrin alpha-M</fullName>
    </recommendedName>
    <alternativeName>
        <fullName>CD11 antigen-like family member B</fullName>
    </alternativeName>
    <alternativeName>
        <fullName>CR-3 alpha chain</fullName>
    </alternativeName>
    <alternativeName>
        <fullName>Cell surface glycoprotein MAC-1 subunit alpha</fullName>
    </alternativeName>
    <alternativeName>
        <fullName>Leukocyte adhesion receptor MO1</fullName>
    </alternativeName>
    <alternativeName>
        <fullName>Neutrophil adherence receptor</fullName>
    </alternativeName>
    <cdAntigenName>CD11b</cdAntigenName>
</protein>
<proteinExistence type="evidence at protein level"/>
<sequence>MALRVLLLTALTLCHGFNLDTENAMTFQENARGFGQSVVQLQGSRVVVGAPQEIVAANQRGSLYQCDYSTGSCEPIRLQVPVEAVNMSLGLSLAATTSPPQLLACGPTVHQTCSENTYVKGLCFLFGSNLRQQPQKFPEALRGCPQEDSDIAFLIDGSGSIIPHDFRRMKEFVSTVMEQLKKSKTLFSLMQYSEEFRIHFTFKEFQNNPNPRSLVKPITQLLGRTHTATGIRKVVRELFNITNGARKNAFKILVVITDGEKFGDPLGYEDVIPEADREGVIRYVIGVGDAFRSEKSRQELNTIASKPPRDHVFQVNNFEALKTIQNQLREKIFAIEGTQTGSSSSFEHEMSQEGFSAAITSNGPLLSTVGSYDWAGGVFLYTSKEKSTFINMTRVDSDMNDAYLGYAAAIILRNRVQSLVLGAPRYQHIGLVAMFRQNTGMWESNANVKGTQIGAYFGASLCSVDVDSNGSTDLVLIGAPHYYEQTRGGQVSVCPLPRGRARWQCDAVLYGEQGQPWGRFGAALTVLGDVNGDKLTDVAIGAPGEEDNRGAVYLFHGTSGSGISPSHSQRIAGSKLSPRLQYFGQSLSGGQDLTMDGLVDLTVGAQGHVLLLRSQPVLRVKAIMEFNPREVARNVFECNDQVVKGKEAGEVRVCLHVQKSTRDRLREGQIQSVVTYDLALDSGRPHSRAVFNETKNSTRRQTQVLGLTQTCETLKLQLPNCIEDPVSPIVLRLNFSLVGTPLSAFGNLRPVLAEDAQRLFTALFPFEKNCGNDNICQDDLSITFSFMSLDCLVVGGPREFNVTVTVRNDGEDSYRTQVTFFFPLDLSYRKVSTLQNQRSQRSWRLACESASSTEVSGALKSTSCSINHPIFPENSEVTFNITFDVDSKASLGNKLLLKANVTSENNMPRTNKTEFQLELPVKYAVYMVVTSHGVSTKYLNFTASENTSRVMQHQYQVSNLGQRSLPISLVFLVPVRLNQTVIWDRPQVTFSENLSSTCHTKERLPSHSDFLAELRKAPVVNCSIAVCQRIQCDIPFFGIQEEFNATLKGNLSFDWYIKTSHNHLLIVSTAEILFNDSVFTLLPGQGAFVRSQTETKVEPFEVPNPLPLIVGSSVGGLLLLALITAALYKLGFFKRQYKDMMSEGGPPGAEPQ</sequence>
<organism>
    <name type="scientific">Homo sapiens</name>
    <name type="common">Human</name>
    <dbReference type="NCBI Taxonomy" id="9606"/>
    <lineage>
        <taxon>Eukaryota</taxon>
        <taxon>Metazoa</taxon>
        <taxon>Chordata</taxon>
        <taxon>Craniata</taxon>
        <taxon>Vertebrata</taxon>
        <taxon>Euteleostomi</taxon>
        <taxon>Mammalia</taxon>
        <taxon>Eutheria</taxon>
        <taxon>Euarchontoglires</taxon>
        <taxon>Primates</taxon>
        <taxon>Haplorrhini</taxon>
        <taxon>Catarrhini</taxon>
        <taxon>Hominidae</taxon>
        <taxon>Homo</taxon>
    </lineage>
</organism>
<dbReference type="EMBL" id="J03925">
    <property type="protein sequence ID" value="AAA59544.1"/>
    <property type="molecule type" value="mRNA"/>
</dbReference>
<dbReference type="EMBL" id="M18044">
    <property type="protein sequence ID" value="AAA59491.1"/>
    <property type="molecule type" value="mRNA"/>
</dbReference>
<dbReference type="EMBL" id="S52227">
    <property type="protein sequence ID" value="AAB24821.1"/>
    <property type="molecule type" value="Genomic_DNA"/>
</dbReference>
<dbReference type="EMBL" id="S52152">
    <property type="protein sequence ID" value="AAB24821.1"/>
    <property type="status" value="JOINED"/>
    <property type="molecule type" value="Genomic_DNA"/>
</dbReference>
<dbReference type="EMBL" id="S52153">
    <property type="protein sequence ID" value="AAB24821.1"/>
    <property type="status" value="JOINED"/>
    <property type="molecule type" value="Genomic_DNA"/>
</dbReference>
<dbReference type="EMBL" id="S52154">
    <property type="protein sequence ID" value="AAB24821.1"/>
    <property type="status" value="JOINED"/>
    <property type="molecule type" value="Genomic_DNA"/>
</dbReference>
<dbReference type="EMBL" id="S52155">
    <property type="protein sequence ID" value="AAB24821.1"/>
    <property type="status" value="JOINED"/>
    <property type="molecule type" value="Genomic_DNA"/>
</dbReference>
<dbReference type="EMBL" id="S52157">
    <property type="protein sequence ID" value="AAB24821.1"/>
    <property type="status" value="JOINED"/>
    <property type="molecule type" value="Genomic_DNA"/>
</dbReference>
<dbReference type="EMBL" id="S52159">
    <property type="protein sequence ID" value="AAB24821.1"/>
    <property type="status" value="JOINED"/>
    <property type="molecule type" value="Genomic_DNA"/>
</dbReference>
<dbReference type="EMBL" id="S52161">
    <property type="protein sequence ID" value="AAB24821.1"/>
    <property type="status" value="JOINED"/>
    <property type="molecule type" value="Genomic_DNA"/>
</dbReference>
<dbReference type="EMBL" id="S52164">
    <property type="protein sequence ID" value="AAB24821.1"/>
    <property type="status" value="JOINED"/>
    <property type="molecule type" value="Genomic_DNA"/>
</dbReference>
<dbReference type="EMBL" id="S52165">
    <property type="protein sequence ID" value="AAB24821.1"/>
    <property type="status" value="JOINED"/>
    <property type="molecule type" value="Genomic_DNA"/>
</dbReference>
<dbReference type="EMBL" id="S52167">
    <property type="protein sequence ID" value="AAB24821.1"/>
    <property type="status" value="JOINED"/>
    <property type="molecule type" value="Genomic_DNA"/>
</dbReference>
<dbReference type="EMBL" id="S52169">
    <property type="protein sequence ID" value="AAB24821.1"/>
    <property type="status" value="JOINED"/>
    <property type="molecule type" value="Genomic_DNA"/>
</dbReference>
<dbReference type="EMBL" id="S52170">
    <property type="protein sequence ID" value="AAB24821.1"/>
    <property type="status" value="JOINED"/>
    <property type="molecule type" value="Genomic_DNA"/>
</dbReference>
<dbReference type="EMBL" id="S52173">
    <property type="protein sequence ID" value="AAB24821.1"/>
    <property type="status" value="JOINED"/>
    <property type="molecule type" value="Genomic_DNA"/>
</dbReference>
<dbReference type="EMBL" id="S52174">
    <property type="protein sequence ID" value="AAB24821.1"/>
    <property type="status" value="JOINED"/>
    <property type="molecule type" value="Genomic_DNA"/>
</dbReference>
<dbReference type="EMBL" id="S52180">
    <property type="protein sequence ID" value="AAB24821.1"/>
    <property type="status" value="JOINED"/>
    <property type="molecule type" value="Genomic_DNA"/>
</dbReference>
<dbReference type="EMBL" id="S52181">
    <property type="protein sequence ID" value="AAB24821.1"/>
    <property type="status" value="JOINED"/>
    <property type="molecule type" value="Genomic_DNA"/>
</dbReference>
<dbReference type="EMBL" id="S52184">
    <property type="protein sequence ID" value="AAB24821.1"/>
    <property type="status" value="JOINED"/>
    <property type="molecule type" value="Genomic_DNA"/>
</dbReference>
<dbReference type="EMBL" id="S52189">
    <property type="protein sequence ID" value="AAB24821.1"/>
    <property type="status" value="JOINED"/>
    <property type="molecule type" value="Genomic_DNA"/>
</dbReference>
<dbReference type="EMBL" id="S52191">
    <property type="protein sequence ID" value="AAB24821.1"/>
    <property type="status" value="JOINED"/>
    <property type="molecule type" value="Genomic_DNA"/>
</dbReference>
<dbReference type="EMBL" id="S52192">
    <property type="protein sequence ID" value="AAB24821.1"/>
    <property type="status" value="JOINED"/>
    <property type="molecule type" value="Genomic_DNA"/>
</dbReference>
<dbReference type="EMBL" id="S52203">
    <property type="protein sequence ID" value="AAB24821.1"/>
    <property type="status" value="JOINED"/>
    <property type="molecule type" value="Genomic_DNA"/>
</dbReference>
<dbReference type="EMBL" id="S52212">
    <property type="protein sequence ID" value="AAB24821.1"/>
    <property type="status" value="JOINED"/>
    <property type="molecule type" value="Genomic_DNA"/>
</dbReference>
<dbReference type="EMBL" id="S52213">
    <property type="protein sequence ID" value="AAB24821.1"/>
    <property type="status" value="JOINED"/>
    <property type="molecule type" value="Genomic_DNA"/>
</dbReference>
<dbReference type="EMBL" id="S52216">
    <property type="protein sequence ID" value="AAB24821.1"/>
    <property type="status" value="JOINED"/>
    <property type="molecule type" value="Genomic_DNA"/>
</dbReference>
<dbReference type="EMBL" id="S52219">
    <property type="protein sequence ID" value="AAB24821.1"/>
    <property type="status" value="JOINED"/>
    <property type="molecule type" value="Genomic_DNA"/>
</dbReference>
<dbReference type="EMBL" id="S52220">
    <property type="protein sequence ID" value="AAB24821.1"/>
    <property type="status" value="JOINED"/>
    <property type="molecule type" value="Genomic_DNA"/>
</dbReference>
<dbReference type="EMBL" id="S52221">
    <property type="protein sequence ID" value="AAB24821.1"/>
    <property type="status" value="JOINED"/>
    <property type="molecule type" value="Genomic_DNA"/>
</dbReference>
<dbReference type="EMBL" id="S52222">
    <property type="protein sequence ID" value="AAB24821.1"/>
    <property type="status" value="JOINED"/>
    <property type="molecule type" value="Genomic_DNA"/>
</dbReference>
<dbReference type="EMBL" id="S52226">
    <property type="protein sequence ID" value="AAB24821.1"/>
    <property type="status" value="JOINED"/>
    <property type="molecule type" value="Genomic_DNA"/>
</dbReference>
<dbReference type="EMBL" id="BC096346">
    <property type="protein sequence ID" value="AAH96346.1"/>
    <property type="molecule type" value="mRNA"/>
</dbReference>
<dbReference type="EMBL" id="BC096347">
    <property type="protein sequence ID" value="AAH96347.1"/>
    <property type="molecule type" value="mRNA"/>
</dbReference>
<dbReference type="EMBL" id="BC096348">
    <property type="protein sequence ID" value="AAH96348.1"/>
    <property type="molecule type" value="mRNA"/>
</dbReference>
<dbReference type="EMBL" id="BC099660">
    <property type="protein sequence ID" value="AAH99660.1"/>
    <property type="molecule type" value="mRNA"/>
</dbReference>
<dbReference type="EMBL" id="J04145">
    <property type="protein sequence ID" value="AAA59903.1"/>
    <property type="molecule type" value="mRNA"/>
</dbReference>
<dbReference type="EMBL" id="M76724">
    <property type="protein sequence ID" value="AAA58410.1"/>
    <property type="molecule type" value="Genomic_DNA"/>
</dbReference>
<dbReference type="EMBL" id="M84477">
    <property type="protein sequence ID" value="AAA51960.1"/>
    <property type="molecule type" value="Genomic_DNA"/>
</dbReference>
<dbReference type="CCDS" id="CCDS45470.1">
    <molecule id="P11215-1"/>
</dbReference>
<dbReference type="CCDS" id="CCDS54004.1">
    <molecule id="P11215-2"/>
</dbReference>
<dbReference type="PIR" id="A31108">
    <property type="entry name" value="RWHU1B"/>
</dbReference>
<dbReference type="RefSeq" id="NP_000623.2">
    <molecule id="P11215-1"/>
    <property type="nucleotide sequence ID" value="NM_000632.4"/>
</dbReference>
<dbReference type="RefSeq" id="NP_001139280.1">
    <molecule id="P11215-2"/>
    <property type="nucleotide sequence ID" value="NM_001145808.2"/>
</dbReference>
<dbReference type="PDB" id="1BHO">
    <property type="method" value="X-ray"/>
    <property type="resolution" value="2.70 A"/>
    <property type="chains" value="1/2=149-337"/>
</dbReference>
<dbReference type="PDB" id="1BHQ">
    <property type="method" value="X-ray"/>
    <property type="resolution" value="2.70 A"/>
    <property type="chains" value="1/2=149-337"/>
</dbReference>
<dbReference type="PDB" id="1IDN">
    <property type="method" value="X-ray"/>
    <property type="resolution" value="2.70 A"/>
    <property type="chains" value="1/2=149-337"/>
</dbReference>
<dbReference type="PDB" id="1IDO">
    <property type="method" value="X-ray"/>
    <property type="resolution" value="1.70 A"/>
    <property type="chains" value="A=143-331"/>
</dbReference>
<dbReference type="PDB" id="1JLM">
    <property type="method" value="X-ray"/>
    <property type="resolution" value="2.00 A"/>
    <property type="chains" value="A=143-334"/>
</dbReference>
<dbReference type="PDB" id="1M1U">
    <property type="method" value="X-ray"/>
    <property type="resolution" value="2.30 A"/>
    <property type="chains" value="A=139-331"/>
</dbReference>
<dbReference type="PDB" id="1MF7">
    <property type="method" value="X-ray"/>
    <property type="resolution" value="1.25 A"/>
    <property type="chains" value="A=144-333"/>
</dbReference>
<dbReference type="PDB" id="1N9Z">
    <property type="method" value="X-ray"/>
    <property type="resolution" value="2.50 A"/>
    <property type="chains" value="A=144-335"/>
</dbReference>
<dbReference type="PDB" id="1NA5">
    <property type="method" value="X-ray"/>
    <property type="resolution" value="1.50 A"/>
    <property type="chains" value="A=144-335"/>
</dbReference>
<dbReference type="PDB" id="2LKE">
    <property type="method" value="NMR"/>
    <property type="chains" value="A=1129-1152"/>
</dbReference>
<dbReference type="PDB" id="2LKJ">
    <property type="method" value="NMR"/>
    <property type="chains" value="A=1129-1152"/>
</dbReference>
<dbReference type="PDB" id="3Q3G">
    <property type="method" value="X-ray"/>
    <property type="resolution" value="2.70 A"/>
    <property type="chains" value="E/G/I/L=148-337"/>
</dbReference>
<dbReference type="PDB" id="3QA3">
    <property type="method" value="X-ray"/>
    <property type="resolution" value="3.00 A"/>
    <property type="chains" value="E/G/I/L=148-337"/>
</dbReference>
<dbReference type="PDB" id="4M76">
    <property type="method" value="X-ray"/>
    <property type="resolution" value="2.80 A"/>
    <property type="chains" value="B=143-337"/>
</dbReference>
<dbReference type="PDB" id="4XW2">
    <property type="method" value="X-ray"/>
    <property type="resolution" value="2.00 A"/>
    <property type="chains" value="A=145-337"/>
</dbReference>
<dbReference type="PDB" id="6RHW">
    <property type="method" value="X-ray"/>
    <property type="resolution" value="2.75 A"/>
    <property type="chains" value="C=143-337"/>
</dbReference>
<dbReference type="PDB" id="7AKK">
    <property type="method" value="X-ray"/>
    <property type="resolution" value="3.40 A"/>
    <property type="chains" value="D/H=143-337"/>
</dbReference>
<dbReference type="PDB" id="7P2D">
    <property type="method" value="X-ray"/>
    <property type="resolution" value="3.20 A"/>
    <property type="chains" value="A=17-771"/>
</dbReference>
<dbReference type="PDB" id="7USL">
    <property type="method" value="EM"/>
    <property type="resolution" value="2.70 A"/>
    <property type="chains" value="A=17-1104"/>
</dbReference>
<dbReference type="PDB" id="7USM">
    <property type="method" value="EM"/>
    <property type="resolution" value="2.70 A"/>
    <property type="chains" value="A=17-1104"/>
</dbReference>
<dbReference type="PDB" id="8CE6">
    <property type="method" value="X-ray"/>
    <property type="resolution" value="1.58 A"/>
    <property type="chains" value="A=149-337"/>
</dbReference>
<dbReference type="PDB" id="8CE9">
    <property type="method" value="X-ray"/>
    <property type="resolution" value="2.11 A"/>
    <property type="chains" value="A/B=149-337"/>
</dbReference>
<dbReference type="PDB" id="8VOH">
    <property type="method" value="NMR"/>
    <property type="chains" value="A=147-340"/>
</dbReference>
<dbReference type="PDB" id="8VOI">
    <property type="method" value="NMR"/>
    <property type="chains" value="A=148-331"/>
</dbReference>
<dbReference type="PDBsum" id="1BHO"/>
<dbReference type="PDBsum" id="1BHQ"/>
<dbReference type="PDBsum" id="1IDN"/>
<dbReference type="PDBsum" id="1IDO"/>
<dbReference type="PDBsum" id="1JLM"/>
<dbReference type="PDBsum" id="1M1U"/>
<dbReference type="PDBsum" id="1MF7"/>
<dbReference type="PDBsum" id="1N9Z"/>
<dbReference type="PDBsum" id="1NA5"/>
<dbReference type="PDBsum" id="2LKE"/>
<dbReference type="PDBsum" id="2LKJ"/>
<dbReference type="PDBsum" id="3Q3G"/>
<dbReference type="PDBsum" id="3QA3"/>
<dbReference type="PDBsum" id="4M76"/>
<dbReference type="PDBsum" id="4XW2"/>
<dbReference type="PDBsum" id="6RHW"/>
<dbReference type="PDBsum" id="7AKK"/>
<dbReference type="PDBsum" id="7P2D"/>
<dbReference type="PDBsum" id="7USL"/>
<dbReference type="PDBsum" id="7USM"/>
<dbReference type="PDBsum" id="8CE6"/>
<dbReference type="PDBsum" id="8CE9"/>
<dbReference type="PDBsum" id="8VOH"/>
<dbReference type="PDBsum" id="8VOI"/>
<dbReference type="BMRB" id="P11215"/>
<dbReference type="EMDB" id="EMD-26738"/>
<dbReference type="EMDB" id="EMD-26739"/>
<dbReference type="SASBDB" id="P11215"/>
<dbReference type="SMR" id="P11215"/>
<dbReference type="BioGRID" id="109890">
    <property type="interactions" value="62"/>
</dbReference>
<dbReference type="ComplexPortal" id="CPX-1826">
    <property type="entry name" value="Integrin alphaM-beta2 complex"/>
</dbReference>
<dbReference type="CORUM" id="P11215"/>
<dbReference type="FunCoup" id="P11215">
    <property type="interactions" value="811"/>
</dbReference>
<dbReference type="IntAct" id="P11215">
    <property type="interactions" value="43"/>
</dbReference>
<dbReference type="MINT" id="P11215"/>
<dbReference type="STRING" id="9606.ENSP00000496959"/>
<dbReference type="BindingDB" id="P11215"/>
<dbReference type="ChEMBL" id="CHEMBL3826"/>
<dbReference type="GlyConnect" id="1411">
    <property type="glycosylation" value="13 N-Linked glycans (8 sites)"/>
</dbReference>
<dbReference type="GlyCosmos" id="P11215">
    <property type="glycosylation" value="19 sites, 12 glycans"/>
</dbReference>
<dbReference type="GlyGen" id="P11215">
    <property type="glycosylation" value="20 sites, 39 N-linked glycans (9 sites)"/>
</dbReference>
<dbReference type="iPTMnet" id="P11215"/>
<dbReference type="PhosphoSitePlus" id="P11215"/>
<dbReference type="BioMuta" id="ITGAM"/>
<dbReference type="DMDM" id="1708572"/>
<dbReference type="jPOST" id="P11215"/>
<dbReference type="MassIVE" id="P11215"/>
<dbReference type="PaxDb" id="9606-ENSP00000441691"/>
<dbReference type="PeptideAtlas" id="P11215"/>
<dbReference type="PRIDE" id="P11215"/>
<dbReference type="ProteomicsDB" id="52719">
    <molecule id="P11215-1"/>
</dbReference>
<dbReference type="Pumba" id="P11215"/>
<dbReference type="ABCD" id="P11215">
    <property type="antibodies" value="16 sequenced antibodies"/>
</dbReference>
<dbReference type="Antibodypedia" id="797">
    <property type="antibodies" value="3385 antibodies from 51 providers"/>
</dbReference>
<dbReference type="CPTC" id="P11215">
    <property type="antibodies" value="1 antibody"/>
</dbReference>
<dbReference type="DNASU" id="3684"/>
<dbReference type="Ensembl" id="ENST00000544665.9">
    <molecule id="P11215-1"/>
    <property type="protein sequence ID" value="ENSP00000441691.3"/>
    <property type="gene ID" value="ENSG00000169896.18"/>
</dbReference>
<dbReference type="Ensembl" id="ENST00000648685.1">
    <molecule id="P11215-2"/>
    <property type="protein sequence ID" value="ENSP00000496959.1"/>
    <property type="gene ID" value="ENSG00000169896.18"/>
</dbReference>
<dbReference type="GeneID" id="3684"/>
<dbReference type="KEGG" id="hsa:3684"/>
<dbReference type="MANE-Select" id="ENST00000544665.9">
    <property type="protein sequence ID" value="ENSP00000441691.3"/>
    <property type="RefSeq nucleotide sequence ID" value="NM_000632.4"/>
    <property type="RefSeq protein sequence ID" value="NP_000623.2"/>
</dbReference>
<dbReference type="UCSC" id="uc002ebq.4">
    <molecule id="P11215-1"/>
    <property type="organism name" value="human"/>
</dbReference>
<dbReference type="AGR" id="HGNC:6149"/>
<dbReference type="CTD" id="3684"/>
<dbReference type="DisGeNET" id="3684"/>
<dbReference type="GeneCards" id="ITGAM"/>
<dbReference type="HGNC" id="HGNC:6149">
    <property type="gene designation" value="ITGAM"/>
</dbReference>
<dbReference type="HPA" id="ENSG00000169896">
    <property type="expression patterns" value="Tissue enriched (bone)"/>
</dbReference>
<dbReference type="MalaCards" id="ITGAM"/>
<dbReference type="MIM" id="120980">
    <property type="type" value="gene"/>
</dbReference>
<dbReference type="MIM" id="609939">
    <property type="type" value="phenotype"/>
</dbReference>
<dbReference type="neXtProt" id="NX_P11215"/>
<dbReference type="OpenTargets" id="ENSG00000169896"/>
<dbReference type="Orphanet" id="536">
    <property type="disease" value="Systemic lupus erythematosus"/>
</dbReference>
<dbReference type="PharmGKB" id="PA29949"/>
<dbReference type="VEuPathDB" id="HostDB:ENSG00000169896"/>
<dbReference type="eggNOG" id="KOG3637">
    <property type="taxonomic scope" value="Eukaryota"/>
</dbReference>
<dbReference type="GeneTree" id="ENSGT00940000161282"/>
<dbReference type="HOGENOM" id="CLU_004111_3_0_1"/>
<dbReference type="InParanoid" id="P11215"/>
<dbReference type="OMA" id="CQRIKCD"/>
<dbReference type="OrthoDB" id="5317514at2759"/>
<dbReference type="PAN-GO" id="P11215">
    <property type="GO annotations" value="7 GO annotations based on evolutionary models"/>
</dbReference>
<dbReference type="PhylomeDB" id="P11215"/>
<dbReference type="TreeFam" id="TF105391"/>
<dbReference type="PathwayCommons" id="P11215"/>
<dbReference type="Reactome" id="R-HSA-166016">
    <property type="pathway name" value="Toll Like Receptor 4 (TLR4) Cascade"/>
</dbReference>
<dbReference type="Reactome" id="R-HSA-202733">
    <property type="pathway name" value="Cell surface interactions at the vascular wall"/>
</dbReference>
<dbReference type="Reactome" id="R-HSA-216083">
    <property type="pathway name" value="Integrin cell surface interactions"/>
</dbReference>
<dbReference type="Reactome" id="R-HSA-6785807">
    <property type="pathway name" value="Interleukin-4 and Interleukin-13 signaling"/>
</dbReference>
<dbReference type="Reactome" id="R-HSA-6798695">
    <property type="pathway name" value="Neutrophil degranulation"/>
</dbReference>
<dbReference type="SignaLink" id="P11215"/>
<dbReference type="SIGNOR" id="P11215"/>
<dbReference type="BioGRID-ORCS" id="3684">
    <property type="hits" value="10 hits in 1145 CRISPR screens"/>
</dbReference>
<dbReference type="ChiTaRS" id="ITGAM">
    <property type="organism name" value="human"/>
</dbReference>
<dbReference type="EvolutionaryTrace" id="P11215"/>
<dbReference type="GeneWiki" id="Integrin_alpha_M"/>
<dbReference type="GenomeRNAi" id="3684"/>
<dbReference type="Pharos" id="P11215">
    <property type="development level" value="Tbio"/>
</dbReference>
<dbReference type="PRO" id="PR:P11215"/>
<dbReference type="Proteomes" id="UP000005640">
    <property type="component" value="Chromosome 16"/>
</dbReference>
<dbReference type="RNAct" id="P11215">
    <property type="molecule type" value="protein"/>
</dbReference>
<dbReference type="Bgee" id="ENSG00000169896">
    <property type="expression patterns" value="Expressed in monocyte and 159 other cell types or tissues"/>
</dbReference>
<dbReference type="ExpressionAtlas" id="P11215">
    <property type="expression patterns" value="baseline and differential"/>
</dbReference>
<dbReference type="GO" id="GO:0009986">
    <property type="term" value="C:cell surface"/>
    <property type="evidence" value="ECO:0000314"/>
    <property type="project" value="UniProtKB"/>
</dbReference>
<dbReference type="GO" id="GO:0009897">
    <property type="term" value="C:external side of plasma membrane"/>
    <property type="evidence" value="ECO:0000318"/>
    <property type="project" value="GO_Central"/>
</dbReference>
<dbReference type="GO" id="GO:0070062">
    <property type="term" value="C:extracellular exosome"/>
    <property type="evidence" value="ECO:0007005"/>
    <property type="project" value="UniProtKB"/>
</dbReference>
<dbReference type="GO" id="GO:0005615">
    <property type="term" value="C:extracellular space"/>
    <property type="evidence" value="ECO:0000314"/>
    <property type="project" value="UniProtKB"/>
</dbReference>
<dbReference type="GO" id="GO:0034688">
    <property type="term" value="C:integrin alphaM-beta2 complex"/>
    <property type="evidence" value="ECO:0000353"/>
    <property type="project" value="ComplexPortal"/>
</dbReference>
<dbReference type="GO" id="GO:0008305">
    <property type="term" value="C:integrin complex"/>
    <property type="evidence" value="ECO:0000318"/>
    <property type="project" value="GO_Central"/>
</dbReference>
<dbReference type="GO" id="GO:0005886">
    <property type="term" value="C:plasma membrane"/>
    <property type="evidence" value="ECO:0000314"/>
    <property type="project" value="UniProtKB"/>
</dbReference>
<dbReference type="GO" id="GO:0044853">
    <property type="term" value="C:plasma membrane raft"/>
    <property type="evidence" value="ECO:0000314"/>
    <property type="project" value="UniProtKB"/>
</dbReference>
<dbReference type="GO" id="GO:0035579">
    <property type="term" value="C:specific granule membrane"/>
    <property type="evidence" value="ECO:0000304"/>
    <property type="project" value="Reactome"/>
</dbReference>
<dbReference type="GO" id="GO:0070821">
    <property type="term" value="C:tertiary granule membrane"/>
    <property type="evidence" value="ECO:0000304"/>
    <property type="project" value="Reactome"/>
</dbReference>
<dbReference type="GO" id="GO:0001540">
    <property type="term" value="F:amyloid-beta binding"/>
    <property type="evidence" value="ECO:0000305"/>
    <property type="project" value="ARUK-UCL"/>
</dbReference>
<dbReference type="GO" id="GO:0038024">
    <property type="term" value="F:cargo receptor activity"/>
    <property type="evidence" value="ECO:0000250"/>
    <property type="project" value="ARUK-UCL"/>
</dbReference>
<dbReference type="GO" id="GO:0001851">
    <property type="term" value="F:complement component C3b binding"/>
    <property type="evidence" value="ECO:0000250"/>
    <property type="project" value="ARUK-UCL"/>
</dbReference>
<dbReference type="GO" id="GO:0031072">
    <property type="term" value="F:heat shock protein binding"/>
    <property type="evidence" value="ECO:0000353"/>
    <property type="project" value="CAFA"/>
</dbReference>
<dbReference type="GO" id="GO:0005178">
    <property type="term" value="F:integrin binding"/>
    <property type="evidence" value="ECO:0000318"/>
    <property type="project" value="GO_Central"/>
</dbReference>
<dbReference type="GO" id="GO:0046872">
    <property type="term" value="F:metal ion binding"/>
    <property type="evidence" value="ECO:0007669"/>
    <property type="project" value="UniProtKB-KW"/>
</dbReference>
<dbReference type="GO" id="GO:0097242">
    <property type="term" value="P:amyloid-beta clearance"/>
    <property type="evidence" value="ECO:0000250"/>
    <property type="project" value="ARUK-UCL"/>
</dbReference>
<dbReference type="GO" id="GO:0007155">
    <property type="term" value="P:cell adhesion"/>
    <property type="evidence" value="ECO:0000304"/>
    <property type="project" value="ProtInc"/>
</dbReference>
<dbReference type="GO" id="GO:0033627">
    <property type="term" value="P:cell adhesion mediated by integrin"/>
    <property type="evidence" value="ECO:0000318"/>
    <property type="project" value="GO_Central"/>
</dbReference>
<dbReference type="GO" id="GO:0098609">
    <property type="term" value="P:cell-cell adhesion"/>
    <property type="evidence" value="ECO:0000318"/>
    <property type="project" value="GO_Central"/>
</dbReference>
<dbReference type="GO" id="GO:0098742">
    <property type="term" value="P:cell-cell adhesion via plasma-membrane adhesion molecules"/>
    <property type="evidence" value="ECO:0000303"/>
    <property type="project" value="ARUK-UCL"/>
</dbReference>
<dbReference type="GO" id="GO:0007160">
    <property type="term" value="P:cell-matrix adhesion"/>
    <property type="evidence" value="ECO:0000314"/>
    <property type="project" value="ComplexPortal"/>
</dbReference>
<dbReference type="GO" id="GO:0002430">
    <property type="term" value="P:complement receptor mediated signaling pathway"/>
    <property type="evidence" value="ECO:0000250"/>
    <property type="project" value="ARUK-UCL"/>
</dbReference>
<dbReference type="GO" id="GO:0150062">
    <property type="term" value="P:complement-mediated synapse pruning"/>
    <property type="evidence" value="ECO:0000250"/>
    <property type="project" value="ARUK-UCL"/>
</dbReference>
<dbReference type="GO" id="GO:0010668">
    <property type="term" value="P:ectodermal cell differentiation"/>
    <property type="evidence" value="ECO:0000270"/>
    <property type="project" value="UniProtKB"/>
</dbReference>
<dbReference type="GO" id="GO:0030900">
    <property type="term" value="P:forebrain development"/>
    <property type="evidence" value="ECO:0000250"/>
    <property type="project" value="ARUK-UCL"/>
</dbReference>
<dbReference type="GO" id="GO:0034113">
    <property type="term" value="P:heterotypic cell-cell adhesion"/>
    <property type="evidence" value="ECO:0007669"/>
    <property type="project" value="Ensembl"/>
</dbReference>
<dbReference type="GO" id="GO:0045087">
    <property type="term" value="P:innate immune response"/>
    <property type="evidence" value="ECO:0007669"/>
    <property type="project" value="UniProtKB-KW"/>
</dbReference>
<dbReference type="GO" id="GO:0007229">
    <property type="term" value="P:integrin-mediated signaling pathway"/>
    <property type="evidence" value="ECO:0000318"/>
    <property type="project" value="GO_Central"/>
</dbReference>
<dbReference type="GO" id="GO:0001774">
    <property type="term" value="P:microglial cell activation"/>
    <property type="evidence" value="ECO:0000250"/>
    <property type="project" value="ARUK-UCL"/>
</dbReference>
<dbReference type="GO" id="GO:0045963">
    <property type="term" value="P:negative regulation of dopamine metabolic process"/>
    <property type="evidence" value="ECO:0000250"/>
    <property type="project" value="ARUK-UCL"/>
</dbReference>
<dbReference type="GO" id="GO:0006911">
    <property type="term" value="P:phagocytosis, engulfment"/>
    <property type="evidence" value="ECO:0000250"/>
    <property type="project" value="ARUK-UCL"/>
</dbReference>
<dbReference type="GO" id="GO:1904151">
    <property type="term" value="P:positive regulation of microglial cell mediated cytotoxicity"/>
    <property type="evidence" value="ECO:0000250"/>
    <property type="project" value="UniProtKB"/>
</dbReference>
<dbReference type="GO" id="GO:0043315">
    <property type="term" value="P:positive regulation of neutrophil degranulation"/>
    <property type="evidence" value="ECO:0000316"/>
    <property type="project" value="UniProtKB"/>
</dbReference>
<dbReference type="GO" id="GO:0090314">
    <property type="term" value="P:positive regulation of protein targeting to membrane"/>
    <property type="evidence" value="ECO:0000250"/>
    <property type="project" value="ARUK-UCL"/>
</dbReference>
<dbReference type="GO" id="GO:0032930">
    <property type="term" value="P:positive regulation of superoxide anion generation"/>
    <property type="evidence" value="ECO:0000316"/>
    <property type="project" value="UniProtKB"/>
</dbReference>
<dbReference type="GO" id="GO:0006898">
    <property type="term" value="P:receptor-mediated endocytosis"/>
    <property type="evidence" value="ECO:0000250"/>
    <property type="project" value="ARUK-UCL"/>
</dbReference>
<dbReference type="GO" id="GO:1904643">
    <property type="term" value="P:response to curcumin"/>
    <property type="evidence" value="ECO:0007669"/>
    <property type="project" value="Ensembl"/>
</dbReference>
<dbReference type="GO" id="GO:0032355">
    <property type="term" value="P:response to estradiol"/>
    <property type="evidence" value="ECO:0007669"/>
    <property type="project" value="Ensembl"/>
</dbReference>
<dbReference type="GO" id="GO:0140459">
    <property type="term" value="P:response to Gram-positive bacterium"/>
    <property type="evidence" value="ECO:0007669"/>
    <property type="project" value="Ensembl"/>
</dbReference>
<dbReference type="GO" id="GO:0002931">
    <property type="term" value="P:response to ischemia"/>
    <property type="evidence" value="ECO:0007669"/>
    <property type="project" value="Ensembl"/>
</dbReference>
<dbReference type="GO" id="GO:0009612">
    <property type="term" value="P:response to mechanical stimulus"/>
    <property type="evidence" value="ECO:0007669"/>
    <property type="project" value="Ensembl"/>
</dbReference>
<dbReference type="GO" id="GO:0150064">
    <property type="term" value="P:vertebrate eye-specific patterning"/>
    <property type="evidence" value="ECO:0000250"/>
    <property type="project" value="ARUK-UCL"/>
</dbReference>
<dbReference type="CDD" id="cd01469">
    <property type="entry name" value="vWA_integrins_alpha_subunit"/>
    <property type="match status" value="1"/>
</dbReference>
<dbReference type="FunFam" id="2.130.10.130:FF:000009">
    <property type="entry name" value="Alpha L integrin"/>
    <property type="match status" value="1"/>
</dbReference>
<dbReference type="FunFam" id="2.130.10.130:FF:000005">
    <property type="entry name" value="Integrin alpha L"/>
    <property type="match status" value="1"/>
</dbReference>
<dbReference type="FunFam" id="2.60.40.1510:FF:000009">
    <property type="entry name" value="Integrin alpha M"/>
    <property type="match status" value="1"/>
</dbReference>
<dbReference type="FunFam" id="2.60.40.1530:FF:000003">
    <property type="entry name" value="Integrin alpha M"/>
    <property type="match status" value="1"/>
</dbReference>
<dbReference type="FunFam" id="1.20.5.930:FF:000004">
    <property type="entry name" value="Integrin subunit alpha M"/>
    <property type="match status" value="1"/>
</dbReference>
<dbReference type="FunFam" id="3.40.50.410:FF:000012">
    <property type="entry name" value="Integrin, alpha 10"/>
    <property type="match status" value="1"/>
</dbReference>
<dbReference type="FunFam" id="2.60.40.1460:FF:000001">
    <property type="entry name" value="Integrin, alpha V"/>
    <property type="match status" value="1"/>
</dbReference>
<dbReference type="Gene3D" id="1.20.5.930">
    <property type="entry name" value="Bicelle-embedded integrin alpha(iib) transmembrane segment"/>
    <property type="match status" value="1"/>
</dbReference>
<dbReference type="Gene3D" id="2.130.10.130">
    <property type="entry name" value="Integrin alpha, N-terminal"/>
    <property type="match status" value="2"/>
</dbReference>
<dbReference type="Gene3D" id="2.60.40.1460">
    <property type="entry name" value="Integrin domains. Chain A, domain 2"/>
    <property type="match status" value="1"/>
</dbReference>
<dbReference type="Gene3D" id="2.60.40.1510">
    <property type="entry name" value="ntegrin, alpha v. Chain A, domain 3"/>
    <property type="match status" value="1"/>
</dbReference>
<dbReference type="Gene3D" id="2.60.40.1530">
    <property type="entry name" value="ntegrin, alpha v. Chain A, domain 4"/>
    <property type="match status" value="1"/>
</dbReference>
<dbReference type="InterPro" id="IPR013517">
    <property type="entry name" value="FG-GAP"/>
</dbReference>
<dbReference type="InterPro" id="IPR013519">
    <property type="entry name" value="Int_alpha_beta-p"/>
</dbReference>
<dbReference type="InterPro" id="IPR000413">
    <property type="entry name" value="Integrin_alpha"/>
</dbReference>
<dbReference type="InterPro" id="IPR018184">
    <property type="entry name" value="Integrin_alpha_C_CS"/>
</dbReference>
<dbReference type="InterPro" id="IPR013649">
    <property type="entry name" value="Integrin_alpha_Ig-like_1"/>
</dbReference>
<dbReference type="InterPro" id="IPR048285">
    <property type="entry name" value="Integrin_alpha_Ig-like_2"/>
</dbReference>
<dbReference type="InterPro" id="IPR028994">
    <property type="entry name" value="Integrin_alpha_N"/>
</dbReference>
<dbReference type="InterPro" id="IPR032695">
    <property type="entry name" value="Integrin_dom_sf"/>
</dbReference>
<dbReference type="InterPro" id="IPR048633">
    <property type="entry name" value="ITGAX-like_Ig_3"/>
</dbReference>
<dbReference type="InterPro" id="IPR002035">
    <property type="entry name" value="VWF_A"/>
</dbReference>
<dbReference type="InterPro" id="IPR036465">
    <property type="entry name" value="vWFA_dom_sf"/>
</dbReference>
<dbReference type="PANTHER" id="PTHR23220">
    <property type="entry name" value="INTEGRIN ALPHA"/>
    <property type="match status" value="1"/>
</dbReference>
<dbReference type="PANTHER" id="PTHR23220:SF130">
    <property type="entry name" value="INTEGRIN ALPHA-M"/>
    <property type="match status" value="1"/>
</dbReference>
<dbReference type="Pfam" id="PF01839">
    <property type="entry name" value="FG-GAP"/>
    <property type="match status" value="2"/>
</dbReference>
<dbReference type="Pfam" id="PF08441">
    <property type="entry name" value="Integrin_A_Ig_1"/>
    <property type="match status" value="1"/>
</dbReference>
<dbReference type="Pfam" id="PF20805">
    <property type="entry name" value="Integrin_A_Ig_2"/>
    <property type="match status" value="1"/>
</dbReference>
<dbReference type="Pfam" id="PF00357">
    <property type="entry name" value="Integrin_alpha"/>
    <property type="match status" value="1"/>
</dbReference>
<dbReference type="Pfam" id="PF21520">
    <property type="entry name" value="ITGAX-like_Ig_3"/>
    <property type="match status" value="1"/>
</dbReference>
<dbReference type="Pfam" id="PF00092">
    <property type="entry name" value="VWA"/>
    <property type="match status" value="1"/>
</dbReference>
<dbReference type="PRINTS" id="PR01185">
    <property type="entry name" value="INTEGRINA"/>
</dbReference>
<dbReference type="PRINTS" id="PR00453">
    <property type="entry name" value="VWFADOMAIN"/>
</dbReference>
<dbReference type="SMART" id="SM00191">
    <property type="entry name" value="Int_alpha"/>
    <property type="match status" value="5"/>
</dbReference>
<dbReference type="SMART" id="SM00327">
    <property type="entry name" value="VWA"/>
    <property type="match status" value="1"/>
</dbReference>
<dbReference type="SUPFAM" id="SSF69318">
    <property type="entry name" value="Integrin alpha N-terminal domain"/>
    <property type="match status" value="1"/>
</dbReference>
<dbReference type="SUPFAM" id="SSF69179">
    <property type="entry name" value="Integrin domains"/>
    <property type="match status" value="3"/>
</dbReference>
<dbReference type="SUPFAM" id="SSF53300">
    <property type="entry name" value="vWA-like"/>
    <property type="match status" value="1"/>
</dbReference>
<dbReference type="PROSITE" id="PS51470">
    <property type="entry name" value="FG_GAP"/>
    <property type="match status" value="7"/>
</dbReference>
<dbReference type="PROSITE" id="PS00242">
    <property type="entry name" value="INTEGRIN_ALPHA"/>
    <property type="match status" value="1"/>
</dbReference>
<dbReference type="PROSITE" id="PS50234">
    <property type="entry name" value="VWFA"/>
    <property type="match status" value="1"/>
</dbReference>
<evidence type="ECO:0000250" key="1"/>
<evidence type="ECO:0000250" key="2">
    <source>
        <dbReference type="UniProtKB" id="P05555"/>
    </source>
</evidence>
<evidence type="ECO:0000250" key="3">
    <source>
        <dbReference type="UniProtKB" id="P08648"/>
    </source>
</evidence>
<evidence type="ECO:0000255" key="4"/>
<evidence type="ECO:0000255" key="5">
    <source>
        <dbReference type="PROSITE-ProRule" id="PRU00219"/>
    </source>
</evidence>
<evidence type="ECO:0000255" key="6">
    <source>
        <dbReference type="PROSITE-ProRule" id="PRU00803"/>
    </source>
</evidence>
<evidence type="ECO:0000269" key="7">
    <source>
    </source>
</evidence>
<evidence type="ECO:0000269" key="8">
    <source>
    </source>
</evidence>
<evidence type="ECO:0000269" key="9">
    <source>
    </source>
</evidence>
<evidence type="ECO:0000269" key="10">
    <source>
    </source>
</evidence>
<evidence type="ECO:0000269" key="11">
    <source>
    </source>
</evidence>
<evidence type="ECO:0000269" key="12">
    <source>
    </source>
</evidence>
<evidence type="ECO:0000269" key="13">
    <source>
    </source>
</evidence>
<evidence type="ECO:0000269" key="14">
    <source>
    </source>
</evidence>
<evidence type="ECO:0000269" key="15">
    <source>
    </source>
</evidence>
<evidence type="ECO:0000269" key="16">
    <source>
    </source>
</evidence>
<evidence type="ECO:0000269" key="17">
    <source>
    </source>
</evidence>
<evidence type="ECO:0000269" key="18">
    <source>
    </source>
</evidence>
<evidence type="ECO:0000269" key="19">
    <source>
    </source>
</evidence>
<evidence type="ECO:0000269" key="20">
    <source>
    </source>
</evidence>
<evidence type="ECO:0000303" key="21">
    <source>
    </source>
</evidence>
<evidence type="ECO:0000303" key="22">
    <source>
    </source>
</evidence>
<evidence type="ECO:0000305" key="23"/>
<evidence type="ECO:0007829" key="24">
    <source>
        <dbReference type="PDB" id="1MF7"/>
    </source>
</evidence>
<evidence type="ECO:0007829" key="25">
    <source>
        <dbReference type="PDB" id="2LKE"/>
    </source>
</evidence>
<evidence type="ECO:0007829" key="26">
    <source>
        <dbReference type="PDB" id="7P2D"/>
    </source>
</evidence>
<evidence type="ECO:0007829" key="27">
    <source>
        <dbReference type="PDB" id="7USL"/>
    </source>
</evidence>
<evidence type="ECO:0007829" key="28">
    <source>
        <dbReference type="PDB" id="7USM"/>
    </source>
</evidence>
<evidence type="ECO:0007829" key="29">
    <source>
        <dbReference type="PDB" id="8VOH"/>
    </source>
</evidence>
<feature type="signal peptide" evidence="18">
    <location>
        <begin position="1"/>
        <end position="16"/>
    </location>
</feature>
<feature type="chain" id="PRO_0000016289" description="Integrin alpha-M">
    <location>
        <begin position="17"/>
        <end position="1152"/>
    </location>
</feature>
<feature type="topological domain" description="Extracellular" evidence="4">
    <location>
        <begin position="17"/>
        <end position="1104"/>
    </location>
</feature>
<feature type="transmembrane region" description="Helical" evidence="4">
    <location>
        <begin position="1105"/>
        <end position="1128"/>
    </location>
</feature>
<feature type="topological domain" description="Cytoplasmic" evidence="4">
    <location>
        <begin position="1129"/>
        <end position="1152"/>
    </location>
</feature>
<feature type="repeat" description="FG-GAP 1" evidence="6">
    <location>
        <begin position="18"/>
        <end position="75"/>
    </location>
</feature>
<feature type="repeat" description="FG-GAP 2" evidence="6">
    <location>
        <begin position="76"/>
        <end position="135"/>
    </location>
</feature>
<feature type="domain" description="VWFA" evidence="5">
    <location>
        <begin position="150"/>
        <end position="328"/>
    </location>
</feature>
<feature type="repeat" description="FG-GAP 3" evidence="6">
    <location>
        <begin position="339"/>
        <end position="390"/>
    </location>
</feature>
<feature type="repeat" description="FG-GAP 4" evidence="6">
    <location>
        <begin position="391"/>
        <end position="442"/>
    </location>
</feature>
<feature type="repeat" description="FG-GAP 5" evidence="6">
    <location>
        <begin position="443"/>
        <end position="503"/>
    </location>
</feature>
<feature type="repeat" description="FG-GAP 6" evidence="6">
    <location>
        <begin position="506"/>
        <end position="564"/>
    </location>
</feature>
<feature type="repeat" description="FG-GAP 7" evidence="6">
    <location>
        <begin position="569"/>
        <end position="629"/>
    </location>
</feature>
<feature type="short sequence motif" description="GFFKR motif">
    <location>
        <begin position="1131"/>
        <end position="1135"/>
    </location>
</feature>
<feature type="binding site" evidence="3">
    <location>
        <position position="465"/>
    </location>
    <ligand>
        <name>Ca(2+)</name>
        <dbReference type="ChEBI" id="CHEBI:29108"/>
        <label>1</label>
    </ligand>
</feature>
<feature type="binding site" evidence="3">
    <location>
        <position position="467"/>
    </location>
    <ligand>
        <name>Ca(2+)</name>
        <dbReference type="ChEBI" id="CHEBI:29108"/>
        <label>1</label>
    </ligand>
</feature>
<feature type="binding site" evidence="3">
    <location>
        <position position="469"/>
    </location>
    <ligand>
        <name>Ca(2+)</name>
        <dbReference type="ChEBI" id="CHEBI:29108"/>
        <label>1</label>
    </ligand>
</feature>
<feature type="binding site" evidence="3">
    <location>
        <position position="473"/>
    </location>
    <ligand>
        <name>Ca(2+)</name>
        <dbReference type="ChEBI" id="CHEBI:29108"/>
        <label>1</label>
    </ligand>
</feature>
<feature type="binding site" evidence="3">
    <location>
        <position position="529"/>
    </location>
    <ligand>
        <name>Ca(2+)</name>
        <dbReference type="ChEBI" id="CHEBI:29108"/>
        <label>2</label>
    </ligand>
</feature>
<feature type="binding site" evidence="3">
    <location>
        <position position="531"/>
    </location>
    <ligand>
        <name>Ca(2+)</name>
        <dbReference type="ChEBI" id="CHEBI:29108"/>
        <label>2</label>
    </ligand>
</feature>
<feature type="binding site" evidence="3">
    <location>
        <position position="533"/>
    </location>
    <ligand>
        <name>Ca(2+)</name>
        <dbReference type="ChEBI" id="CHEBI:29108"/>
        <label>2</label>
    </ligand>
</feature>
<feature type="binding site" evidence="3">
    <location>
        <position position="537"/>
    </location>
    <ligand>
        <name>Ca(2+)</name>
        <dbReference type="ChEBI" id="CHEBI:29108"/>
        <label>2</label>
    </ligand>
</feature>
<feature type="binding site" evidence="3">
    <location>
        <position position="592"/>
    </location>
    <ligand>
        <name>Ca(2+)</name>
        <dbReference type="ChEBI" id="CHEBI:29108"/>
        <label>3</label>
    </ligand>
</feature>
<feature type="binding site" evidence="3">
    <location>
        <position position="596"/>
    </location>
    <ligand>
        <name>Ca(2+)</name>
        <dbReference type="ChEBI" id="CHEBI:29108"/>
        <label>3</label>
    </ligand>
</feature>
<feature type="binding site" evidence="3">
    <location>
        <position position="600"/>
    </location>
    <ligand>
        <name>Ca(2+)</name>
        <dbReference type="ChEBI" id="CHEBI:29108"/>
        <label>3</label>
    </ligand>
</feature>
<feature type="glycosylation site" description="N-linked (GlcNAc...) asparagine" evidence="4">
    <location>
        <position position="86"/>
    </location>
</feature>
<feature type="glycosylation site" description="N-linked (GlcNAc...) asparagine" evidence="4">
    <location>
        <position position="240"/>
    </location>
</feature>
<feature type="glycosylation site" description="N-linked (GlcNAc...) asparagine" evidence="4">
    <location>
        <position position="391"/>
    </location>
</feature>
<feature type="glycosylation site" description="N-linked (GlcNAc...) asparagine" evidence="4">
    <location>
        <position position="469"/>
    </location>
</feature>
<feature type="glycosylation site" description="N-linked (GlcNAc...) asparagine" evidence="4">
    <location>
        <position position="692"/>
    </location>
</feature>
<feature type="glycosylation site" description="N-linked (GlcNAc...) asparagine" evidence="4">
    <location>
        <position position="696"/>
    </location>
</feature>
<feature type="glycosylation site" description="N-linked (GlcNAc...) asparagine" evidence="4">
    <location>
        <position position="734"/>
    </location>
</feature>
<feature type="glycosylation site" description="N-linked (GlcNAc...) asparagine" evidence="4">
    <location>
        <position position="801"/>
    </location>
</feature>
<feature type="glycosylation site" description="N-linked (GlcNAc...) asparagine" evidence="4">
    <location>
        <position position="880"/>
    </location>
</feature>
<feature type="glycosylation site" description="N-linked (GlcNAc...) asparagine" evidence="13">
    <location>
        <position position="900"/>
    </location>
</feature>
<feature type="glycosylation site" description="N-linked (GlcNAc...) asparagine" evidence="4">
    <location>
        <position position="911"/>
    </location>
</feature>
<feature type="glycosylation site" description="N-linked (GlcNAc...) asparagine" evidence="13">
    <location>
        <position position="940"/>
    </location>
</feature>
<feature type="glycosylation site" description="N-linked (GlcNAc...) asparagine" evidence="13">
    <location>
        <position position="946"/>
    </location>
</feature>
<feature type="glycosylation site" description="N-linked (GlcNAc...) asparagine" evidence="4">
    <location>
        <position position="978"/>
    </location>
</feature>
<feature type="glycosylation site" description="N-linked (GlcNAc...) asparagine" evidence="4">
    <location>
        <position position="993"/>
    </location>
</feature>
<feature type="glycosylation site" description="N-linked (GlcNAc...) asparagine" evidence="4">
    <location>
        <position position="1021"/>
    </location>
</feature>
<feature type="glycosylation site" description="N-linked (GlcNAc...) asparagine" evidence="4">
    <location>
        <position position="1044"/>
    </location>
</feature>
<feature type="glycosylation site" description="N-linked (GlcNAc...) asparagine" evidence="4">
    <location>
        <position position="1050"/>
    </location>
</feature>
<feature type="glycosylation site" description="N-linked (GlcNAc...) asparagine" evidence="4">
    <location>
        <position position="1075"/>
    </location>
</feature>
<feature type="disulfide bond" evidence="1">
    <location>
        <begin position="66"/>
        <end position="73"/>
    </location>
</feature>
<feature type="disulfide bond" evidence="1">
    <location>
        <begin position="105"/>
        <end position="123"/>
    </location>
</feature>
<feature type="disulfide bond" evidence="1">
    <location>
        <begin position="654"/>
        <end position="711"/>
    </location>
</feature>
<feature type="disulfide bond" evidence="1">
    <location>
        <begin position="770"/>
        <end position="776"/>
    </location>
</feature>
<feature type="disulfide bond" evidence="1">
    <location>
        <begin position="847"/>
        <end position="864"/>
    </location>
</feature>
<feature type="disulfide bond" evidence="1">
    <location>
        <begin position="998"/>
        <end position="1022"/>
    </location>
</feature>
<feature type="disulfide bond" evidence="1">
    <location>
        <begin position="1027"/>
        <end position="1032"/>
    </location>
</feature>
<feature type="splice variant" id="VSP_047365" description="In isoform 2." evidence="21 22">
    <original>G</original>
    <variation>GQ</variation>
    <location>
        <position position="499"/>
    </location>
</feature>
<feature type="sequence variant" id="VAR_043870" description="Influences susceptibility to SLE; dbSNP:rs1143679." evidence="10 12">
    <original>R</original>
    <variation>H</variation>
    <location>
        <position position="77"/>
    </location>
</feature>
<feature type="sequence variant" id="VAR_043871" description="In dbSNP:rs1143680." evidence="10">
    <original>M</original>
    <variation>T</variation>
    <location>
        <position position="441"/>
    </location>
</feature>
<feature type="sequence variant" id="VAR_043872" description="In dbSNP:rs1143683." evidence="10">
    <original>A</original>
    <variation>V</variation>
    <location>
        <position position="858"/>
    </location>
</feature>
<feature type="sequence variant" id="VAR_043873" description="In dbSNP:rs1143678." evidence="10">
    <original>P</original>
    <variation>S</variation>
    <location>
        <position position="1146"/>
    </location>
</feature>
<feature type="sequence conflict" description="In Ref. 2; AAA59491." evidence="23" ref="2">
    <original>L</original>
    <variation>P</variation>
    <location>
        <position position="965"/>
    </location>
</feature>
<feature type="strand" evidence="27">
    <location>
        <begin position="25"/>
        <end position="28"/>
    </location>
</feature>
<feature type="turn" evidence="27">
    <location>
        <begin position="32"/>
        <end position="35"/>
    </location>
</feature>
<feature type="strand" evidence="27">
    <location>
        <begin position="36"/>
        <end position="41"/>
    </location>
</feature>
<feature type="turn" evidence="27">
    <location>
        <begin position="42"/>
        <end position="44"/>
    </location>
</feature>
<feature type="strand" evidence="27">
    <location>
        <begin position="45"/>
        <end position="50"/>
    </location>
</feature>
<feature type="strand" evidence="28">
    <location>
        <begin position="54"/>
        <end position="56"/>
    </location>
</feature>
<feature type="strand" evidence="27">
    <location>
        <begin position="61"/>
        <end position="67"/>
    </location>
</feature>
<feature type="turn" evidence="27">
    <location>
        <begin position="68"/>
        <end position="70"/>
    </location>
</feature>
<feature type="strand" evidence="27">
    <location>
        <begin position="73"/>
        <end position="75"/>
    </location>
</feature>
<feature type="strand" evidence="27">
    <location>
        <begin position="91"/>
        <end position="96"/>
    </location>
</feature>
<feature type="turn" evidence="27">
    <location>
        <begin position="97"/>
        <end position="100"/>
    </location>
</feature>
<feature type="strand" evidence="27">
    <location>
        <begin position="101"/>
        <end position="112"/>
    </location>
</feature>
<feature type="strand" evidence="27">
    <location>
        <begin position="117"/>
        <end position="126"/>
    </location>
</feature>
<feature type="strand" evidence="27">
    <location>
        <begin position="128"/>
        <end position="131"/>
    </location>
</feature>
<feature type="strand" evidence="26">
    <location>
        <begin position="135"/>
        <end position="140"/>
    </location>
</feature>
<feature type="strand" evidence="24">
    <location>
        <begin position="149"/>
        <end position="156"/>
    </location>
</feature>
<feature type="strand" evidence="29">
    <location>
        <begin position="159"/>
        <end position="161"/>
    </location>
</feature>
<feature type="helix" evidence="24">
    <location>
        <begin position="163"/>
        <end position="180"/>
    </location>
</feature>
<feature type="strand" evidence="24">
    <location>
        <begin position="185"/>
        <end position="200"/>
    </location>
</feature>
<feature type="helix" evidence="24">
    <location>
        <begin position="202"/>
        <end position="207"/>
    </location>
</feature>
<feature type="helix" evidence="24">
    <location>
        <begin position="211"/>
        <end position="215"/>
    </location>
</feature>
<feature type="helix" evidence="24">
    <location>
        <begin position="227"/>
        <end position="236"/>
    </location>
</feature>
<feature type="turn" evidence="24">
    <location>
        <begin position="237"/>
        <end position="239"/>
    </location>
</feature>
<feature type="helix" evidence="24">
    <location>
        <begin position="241"/>
        <end position="243"/>
    </location>
</feature>
<feature type="strand" evidence="24">
    <location>
        <begin position="249"/>
        <end position="259"/>
    </location>
</feature>
<feature type="helix" evidence="24">
    <location>
        <begin position="268"/>
        <end position="270"/>
    </location>
</feature>
<feature type="helix" evidence="24">
    <location>
        <begin position="272"/>
        <end position="277"/>
    </location>
</feature>
<feature type="strand" evidence="24">
    <location>
        <begin position="280"/>
        <end position="288"/>
    </location>
</feature>
<feature type="helix" evidence="24">
    <location>
        <begin position="289"/>
        <end position="291"/>
    </location>
</feature>
<feature type="helix" evidence="24">
    <location>
        <begin position="294"/>
        <end position="303"/>
    </location>
</feature>
<feature type="helix" evidence="24">
    <location>
        <begin position="308"/>
        <end position="311"/>
    </location>
</feature>
<feature type="strand" evidence="24">
    <location>
        <begin position="312"/>
        <end position="317"/>
    </location>
</feature>
<feature type="helix" evidence="24">
    <location>
        <begin position="318"/>
        <end position="324"/>
    </location>
</feature>
<feature type="helix" evidence="24">
    <location>
        <begin position="325"/>
        <end position="333"/>
    </location>
</feature>
<feature type="strand" evidence="27">
    <location>
        <begin position="348"/>
        <end position="350"/>
    </location>
</feature>
<feature type="strand" evidence="27">
    <location>
        <begin position="355"/>
        <end position="359"/>
    </location>
</feature>
<feature type="strand" evidence="27">
    <location>
        <begin position="361"/>
        <end position="367"/>
    </location>
</feature>
<feature type="helix" evidence="27">
    <location>
        <begin position="371"/>
        <end position="374"/>
    </location>
</feature>
<feature type="strand" evidence="27">
    <location>
        <begin position="378"/>
        <end position="385"/>
    </location>
</feature>
<feature type="strand" evidence="27">
    <location>
        <begin position="387"/>
        <end position="390"/>
    </location>
</feature>
<feature type="helix" evidence="27">
    <location>
        <begin position="397"/>
        <end position="399"/>
    </location>
</feature>
<feature type="strand" evidence="27">
    <location>
        <begin position="406"/>
        <end position="413"/>
    </location>
</feature>
<feature type="strand" evidence="27">
    <location>
        <begin position="416"/>
        <end position="423"/>
    </location>
</feature>
<feature type="helix" evidence="27">
    <location>
        <begin position="426"/>
        <end position="428"/>
    </location>
</feature>
<feature type="strand" evidence="27">
    <location>
        <begin position="430"/>
        <end position="438"/>
    </location>
</feature>
<feature type="strand" evidence="27">
    <location>
        <begin position="441"/>
        <end position="449"/>
    </location>
</feature>
<feature type="strand" evidence="27">
    <location>
        <begin position="459"/>
        <end position="464"/>
    </location>
</feature>
<feature type="strand" evidence="27">
    <location>
        <begin position="469"/>
        <end position="471"/>
    </location>
</feature>
<feature type="strand" evidence="27">
    <location>
        <begin position="474"/>
        <end position="483"/>
    </location>
</feature>
<feature type="strand" evidence="27">
    <location>
        <begin position="485"/>
        <end position="495"/>
    </location>
</feature>
<feature type="strand" evidence="27">
    <location>
        <begin position="507"/>
        <end position="509"/>
    </location>
</feature>
<feature type="strand" evidence="27">
    <location>
        <begin position="515"/>
        <end position="520"/>
    </location>
</feature>
<feature type="strand" evidence="27">
    <location>
        <begin position="524"/>
        <end position="528"/>
    </location>
</feature>
<feature type="strand" evidence="27">
    <location>
        <begin position="530"/>
        <end position="534"/>
    </location>
</feature>
<feature type="strand" evidence="27">
    <location>
        <begin position="537"/>
        <end position="542"/>
    </location>
</feature>
<feature type="helix" evidence="27">
    <location>
        <begin position="545"/>
        <end position="548"/>
    </location>
</feature>
<feature type="strand" evidence="27">
    <location>
        <begin position="550"/>
        <end position="555"/>
    </location>
</feature>
<feature type="turn" evidence="27">
    <location>
        <begin position="559"/>
        <end position="561"/>
    </location>
</feature>
<feature type="strand" evidence="27">
    <location>
        <begin position="568"/>
        <end position="572"/>
    </location>
</feature>
<feature type="helix" evidence="27">
    <location>
        <begin position="573"/>
        <end position="575"/>
    </location>
</feature>
<feature type="strand" evidence="27">
    <location>
        <begin position="585"/>
        <end position="591"/>
    </location>
</feature>
<feature type="strand" evidence="27">
    <location>
        <begin position="593"/>
        <end position="597"/>
    </location>
</feature>
<feature type="strand" evidence="27">
    <location>
        <begin position="600"/>
        <end position="605"/>
    </location>
</feature>
<feature type="strand" evidence="27">
    <location>
        <begin position="608"/>
        <end position="614"/>
    </location>
</feature>
<feature type="strand" evidence="27">
    <location>
        <begin position="617"/>
        <end position="631"/>
    </location>
</feature>
<feature type="helix" evidence="27">
    <location>
        <begin position="633"/>
        <end position="636"/>
    </location>
</feature>
<feature type="strand" evidence="27">
    <location>
        <begin position="640"/>
        <end position="642"/>
    </location>
</feature>
<feature type="strand" evidence="26">
    <location>
        <begin position="645"/>
        <end position="647"/>
    </location>
</feature>
<feature type="strand" evidence="27">
    <location>
        <begin position="650"/>
        <end position="659"/>
    </location>
</feature>
<feature type="strand" evidence="27">
    <location>
        <begin position="672"/>
        <end position="680"/>
    </location>
</feature>
<feature type="turn" evidence="27">
    <location>
        <begin position="681"/>
        <end position="683"/>
    </location>
</feature>
<feature type="strand" evidence="28">
    <location>
        <begin position="684"/>
        <end position="686"/>
    </location>
</feature>
<feature type="turn" evidence="27">
    <location>
        <begin position="692"/>
        <end position="694"/>
    </location>
</feature>
<feature type="strand" evidence="27">
    <location>
        <begin position="695"/>
        <end position="705"/>
    </location>
</feature>
<feature type="strand" evidence="27">
    <location>
        <begin position="710"/>
        <end position="717"/>
    </location>
</feature>
<feature type="strand" evidence="27">
    <location>
        <begin position="729"/>
        <end position="739"/>
    </location>
</feature>
<feature type="turn" evidence="27">
    <location>
        <begin position="743"/>
        <end position="746"/>
    </location>
</feature>
<feature type="strand" evidence="27">
    <location>
        <begin position="759"/>
        <end position="764"/>
    </location>
</feature>
<feature type="strand" evidence="28">
    <location>
        <begin position="770"/>
        <end position="773"/>
    </location>
</feature>
<feature type="strand" evidence="27">
    <location>
        <begin position="780"/>
        <end position="785"/>
    </location>
</feature>
<feature type="strand" evidence="27">
    <location>
        <begin position="792"/>
        <end position="794"/>
    </location>
</feature>
<feature type="strand" evidence="27">
    <location>
        <begin position="798"/>
        <end position="800"/>
    </location>
</feature>
<feature type="strand" evidence="27">
    <location>
        <begin position="803"/>
        <end position="808"/>
    </location>
</feature>
<feature type="strand" evidence="27">
    <location>
        <begin position="813"/>
        <end position="815"/>
    </location>
</feature>
<feature type="strand" evidence="27">
    <location>
        <begin position="817"/>
        <end position="822"/>
    </location>
</feature>
<feature type="strand" evidence="27">
    <location>
        <begin position="826"/>
        <end position="832"/>
    </location>
</feature>
<feature type="strand" evidence="27">
    <location>
        <begin position="845"/>
        <end position="848"/>
    </location>
</feature>
<feature type="strand" evidence="27">
    <location>
        <begin position="860"/>
        <end position="871"/>
    </location>
</feature>
<feature type="strand" evidence="27">
    <location>
        <begin position="875"/>
        <end position="885"/>
    </location>
</feature>
<feature type="strand" evidence="27">
    <location>
        <begin position="894"/>
        <end position="902"/>
    </location>
</feature>
<feature type="turn" evidence="27">
    <location>
        <begin position="911"/>
        <end position="913"/>
    </location>
</feature>
<feature type="strand" evidence="27">
    <location>
        <begin position="914"/>
        <end position="924"/>
    </location>
</feature>
<feature type="strand" evidence="27">
    <location>
        <begin position="928"/>
        <end position="931"/>
    </location>
</feature>
<feature type="strand" evidence="27">
    <location>
        <begin position="938"/>
        <end position="940"/>
    </location>
</feature>
<feature type="strand" evidence="27">
    <location>
        <begin position="949"/>
        <end position="958"/>
    </location>
</feature>
<feature type="strand" evidence="27">
    <location>
        <begin position="965"/>
        <end position="979"/>
    </location>
</feature>
<feature type="strand" evidence="27">
    <location>
        <begin position="981"/>
        <end position="992"/>
    </location>
</feature>
<feature type="strand" evidence="27">
    <location>
        <begin position="997"/>
        <end position="1003"/>
    </location>
</feature>
<feature type="helix" evidence="27">
    <location>
        <begin position="1010"/>
        <end position="1016"/>
    </location>
</feature>
<feature type="strand" evidence="27">
    <location>
        <begin position="1019"/>
        <end position="1021"/>
    </location>
</feature>
<feature type="strand" evidence="27">
    <location>
        <begin position="1024"/>
        <end position="1037"/>
    </location>
</feature>
<feature type="strand" evidence="27">
    <location>
        <begin position="1042"/>
        <end position="1051"/>
    </location>
</feature>
<feature type="strand" evidence="27">
    <location>
        <begin position="1060"/>
        <end position="1062"/>
    </location>
</feature>
<feature type="strand" evidence="27">
    <location>
        <begin position="1064"/>
        <end position="1073"/>
    </location>
</feature>
<feature type="turn" evidence="27">
    <location>
        <begin position="1076"/>
        <end position="1078"/>
    </location>
</feature>
<feature type="helix" evidence="27">
    <location>
        <begin position="1086"/>
        <end position="1088"/>
    </location>
</feature>
<feature type="strand" evidence="27">
    <location>
        <begin position="1089"/>
        <end position="1098"/>
    </location>
</feature>
<feature type="helix" evidence="25">
    <location>
        <begin position="1130"/>
        <end position="1132"/>
    </location>
</feature>
<feature type="helix" evidence="25">
    <location>
        <begin position="1133"/>
        <end position="1143"/>
    </location>
</feature>
<feature type="strand" evidence="25">
    <location>
        <begin position="1147"/>
        <end position="1149"/>
    </location>
</feature>
<gene>
    <name type="primary">ITGAM</name>
    <name type="synonym">CD11B</name>
    <name type="synonym">CR3A</name>
</gene>
<accession>P11215</accession>
<accession>Q4VAK0</accession>
<accession>Q4VAK1</accession>
<accession>Q4VAK2</accession>